<protein>
    <recommendedName>
        <fullName>Genome polyprotein</fullName>
    </recommendedName>
    <component>
        <recommendedName>
            <fullName>Leader protease</fullName>
            <shortName>Lpro</shortName>
            <ecNumber evidence="14">3.4.22.46</ecNumber>
        </recommendedName>
    </component>
    <component>
        <recommendedName>
            <fullName>Capsid protein VP0</fullName>
        </recommendedName>
        <alternativeName>
            <fullName>VP4-VP2</fullName>
        </alternativeName>
    </component>
    <component>
        <recommendedName>
            <fullName>Capsid protein VP4</fullName>
        </recommendedName>
        <alternativeName>
            <fullName>P1A</fullName>
        </alternativeName>
        <alternativeName>
            <fullName>Virion protein 4</fullName>
        </alternativeName>
    </component>
    <component>
        <recommendedName>
            <fullName>Capsid protein VP2</fullName>
        </recommendedName>
        <alternativeName>
            <fullName>P1B</fullName>
        </alternativeName>
        <alternativeName>
            <fullName>Virion protein 2</fullName>
        </alternativeName>
    </component>
    <component>
        <recommendedName>
            <fullName>Capsid protein VP3</fullName>
        </recommendedName>
        <alternativeName>
            <fullName>P1C</fullName>
        </alternativeName>
        <alternativeName>
            <fullName>Virion protein 3</fullName>
        </alternativeName>
    </component>
    <component>
        <recommendedName>
            <fullName>Capsid protein VP1</fullName>
        </recommendedName>
        <alternativeName>
            <fullName>P1D</fullName>
        </alternativeName>
        <alternativeName>
            <fullName>Virion protein 1</fullName>
        </alternativeName>
    </component>
    <component>
        <recommendedName>
            <fullName>Protein 2A</fullName>
            <shortName>P2A</shortName>
        </recommendedName>
        <alternativeName>
            <fullName>P52</fullName>
        </alternativeName>
    </component>
    <component>
        <recommendedName>
            <fullName>Protein 2B</fullName>
            <shortName>P2B</shortName>
        </recommendedName>
    </component>
    <component>
        <recommendedName>
            <fullName>Protein 2C</fullName>
            <shortName>P2C</shortName>
            <ecNumber evidence="23">3.6.1.15</ecNumber>
        </recommendedName>
    </component>
    <component>
        <recommendedName>
            <fullName>Protein 3A</fullName>
            <shortName>P3A</shortName>
        </recommendedName>
    </component>
    <component>
        <recommendedName>
            <fullName>Protein 3B-1</fullName>
            <shortName>P3B-1</shortName>
        </recommendedName>
        <alternativeName>
            <fullName>Genome-linked protein VPg1</fullName>
        </alternativeName>
    </component>
    <component>
        <recommendedName>
            <fullName>Protein 3B-2</fullName>
            <shortName>P3B-2</shortName>
        </recommendedName>
        <alternativeName>
            <fullName>Genome-linked protein VPg2</fullName>
        </alternativeName>
    </component>
    <component>
        <recommendedName>
            <fullName>Protein 3B-3</fullName>
            <shortName>P3B-3</shortName>
        </recommendedName>
        <alternativeName>
            <fullName>Genome-linked protein VPg3</fullName>
        </alternativeName>
    </component>
    <component>
        <recommendedName>
            <fullName>Protease 3C</fullName>
            <ecNumber evidence="37">3.4.22.28</ecNumber>
        </recommendedName>
        <alternativeName>
            <fullName>Picornain 3C</fullName>
            <shortName>P3C</shortName>
        </alternativeName>
        <alternativeName>
            <fullName>Protease P20B</fullName>
        </alternativeName>
    </component>
    <component>
        <recommendedName>
            <fullName>RNA-directed RNA polymerase 3D-POL</fullName>
            <shortName>P3D-POL</shortName>
            <ecNumber>2.7.7.48</ecNumber>
        </recommendedName>
        <alternativeName>
            <fullName>P56A</fullName>
        </alternativeName>
    </component>
</protein>
<organismHost>
    <name type="scientific">Bos taurus</name>
    <name type="common">Bovine</name>
    <dbReference type="NCBI Taxonomy" id="9913"/>
</organismHost>
<organismHost>
    <name type="scientific">Capra hircus</name>
    <name type="common">Goat</name>
    <dbReference type="NCBI Taxonomy" id="9925"/>
</organismHost>
<organismHost>
    <name type="scientific">Cervidae</name>
    <name type="common">Deer</name>
    <dbReference type="NCBI Taxonomy" id="9850"/>
</organismHost>
<organismHost>
    <name type="scientific">Erinaceidae</name>
    <name type="common">hedgehogs</name>
    <dbReference type="NCBI Taxonomy" id="9363"/>
</organismHost>
<organismHost>
    <name type="scientific">Loxodonta africana</name>
    <name type="common">African elephant</name>
    <dbReference type="NCBI Taxonomy" id="9785"/>
</organismHost>
<organismHost>
    <name type="scientific">Ovis aries</name>
    <name type="common">Sheep</name>
    <dbReference type="NCBI Taxonomy" id="9940"/>
</organismHost>
<organismHost>
    <name type="scientific">Rattus norvegicus</name>
    <name type="common">Rat</name>
    <dbReference type="NCBI Taxonomy" id="10116"/>
</organismHost>
<organismHost>
    <name type="scientific">Sus scrofa</name>
    <name type="common">Pig</name>
    <dbReference type="NCBI Taxonomy" id="9823"/>
</organismHost>
<feature type="chain" id="PRO_0000039872" description="Genome polyprotein">
    <location>
        <begin position="1"/>
        <end position="2332"/>
    </location>
</feature>
<feature type="chain" id="PRO_0000039873" description="Leader protease">
    <location>
        <begin position="1"/>
        <end position="201"/>
    </location>
</feature>
<feature type="chain" id="PRO_0000374076" description="Capsid protein VP0" evidence="9">
    <location>
        <begin position="202"/>
        <end position="504"/>
    </location>
</feature>
<feature type="chain" id="PRO_0000039876" description="Capsid protein VP4" evidence="9">
    <location>
        <begin position="202"/>
        <end position="286"/>
    </location>
</feature>
<feature type="chain" id="PRO_0000039877" description="Capsid protein VP2" evidence="9">
    <location>
        <begin position="287"/>
        <end position="504"/>
    </location>
</feature>
<feature type="chain" id="PRO_0000039878" description="Capsid protein VP3" evidence="9">
    <location>
        <begin position="505"/>
        <end position="724"/>
    </location>
</feature>
<feature type="chain" id="PRO_0000039879" description="Capsid protein VP1">
    <location>
        <begin position="725"/>
        <end position="935"/>
    </location>
</feature>
<feature type="chain" id="PRO_0000039880" description="Protein 2A" evidence="9">
    <location>
        <begin position="936"/>
        <end position="953"/>
    </location>
</feature>
<feature type="chain" id="PRO_0000310976" description="Protein 2B" evidence="9">
    <location>
        <begin position="954"/>
        <end position="1107"/>
    </location>
</feature>
<feature type="chain" id="PRO_0000039881" description="Protein 2C" evidence="9">
    <location>
        <begin position="1108"/>
        <end position="1425"/>
    </location>
</feature>
<feature type="chain" id="PRO_0000039882" description="Protein 3A" evidence="9">
    <location>
        <begin position="1426"/>
        <end position="1578"/>
    </location>
</feature>
<feature type="chain" id="PRO_0000039883" description="Protein 3B-1" evidence="9">
    <location>
        <begin position="1579"/>
        <end position="1601"/>
    </location>
</feature>
<feature type="chain" id="PRO_0000310977" description="Protein 3B-2" evidence="9">
    <location>
        <begin position="1602"/>
        <end position="1625"/>
    </location>
</feature>
<feature type="chain" id="PRO_0000310978" description="Protein 3B-3" evidence="9">
    <location>
        <begin position="1626"/>
        <end position="1649"/>
    </location>
</feature>
<feature type="chain" id="PRO_0000039884" description="Protease 3C" evidence="9">
    <location>
        <begin position="1650"/>
        <end position="1862"/>
    </location>
</feature>
<feature type="chain" id="PRO_0000039885" description="RNA-directed RNA polymerase 3D-POL" evidence="9">
    <location>
        <begin position="1863"/>
        <end position="2332"/>
    </location>
</feature>
<feature type="topological domain" description="Cytoplasmic" evidence="9">
    <location>
        <begin position="1"/>
        <end position="1480"/>
    </location>
</feature>
<feature type="intramembrane region" evidence="9">
    <location>
        <begin position="1481"/>
        <end position="1501"/>
    </location>
</feature>
<feature type="topological domain" description="Cytoplasmic" evidence="9">
    <location>
        <begin position="1502"/>
        <end position="2332"/>
    </location>
</feature>
<feature type="domain" description="Peptidase C28">
    <location>
        <begin position="1"/>
        <end position="201"/>
    </location>
</feature>
<feature type="domain" description="SF3 helicase" evidence="11">
    <location>
        <begin position="1189"/>
        <end position="1353"/>
    </location>
</feature>
<feature type="domain" description="Peptidase C3" evidence="12">
    <location>
        <begin position="1652"/>
        <end position="1848"/>
    </location>
</feature>
<feature type="domain" description="RdRp catalytic" evidence="10">
    <location>
        <begin position="2096"/>
        <end position="2214"/>
    </location>
</feature>
<feature type="region of interest" description="Disordered" evidence="13">
    <location>
        <begin position="197"/>
        <end position="218"/>
    </location>
</feature>
<feature type="region of interest" description="Disordered" evidence="13">
    <location>
        <begin position="238"/>
        <end position="265"/>
    </location>
</feature>
<feature type="region of interest" description="Antigenic epitope" evidence="2">
    <location>
        <begin position="788"/>
        <end position="796"/>
    </location>
</feature>
<feature type="region of interest" description="Disordered" evidence="13">
    <location>
        <begin position="1529"/>
        <end position="1584"/>
    </location>
</feature>
<feature type="short sequence motif" description="Cell attachment site" evidence="32 40">
    <location>
        <begin position="869"/>
        <end position="871"/>
    </location>
</feature>
<feature type="short sequence motif" description="Nuclear localization signal" evidence="7">
    <location>
        <begin position="1878"/>
        <end position="1886"/>
    </location>
</feature>
<feature type="short sequence motif" description="Nuclear localization signal" evidence="27">
    <location>
        <begin position="1879"/>
        <end position="1886"/>
    </location>
</feature>
<feature type="compositionally biased region" description="Polar residues" evidence="13">
    <location>
        <begin position="204"/>
        <end position="218"/>
    </location>
</feature>
<feature type="compositionally biased region" description="Polar residues" evidence="13">
    <location>
        <begin position="238"/>
        <end position="251"/>
    </location>
</feature>
<feature type="compositionally biased region" description="Low complexity" evidence="13">
    <location>
        <begin position="252"/>
        <end position="265"/>
    </location>
</feature>
<feature type="compositionally biased region" description="Basic and acidic residues" evidence="13">
    <location>
        <begin position="1529"/>
        <end position="1538"/>
    </location>
</feature>
<feature type="active site" description="For leader protease activity" evidence="35 42">
    <location>
        <position position="51"/>
    </location>
</feature>
<feature type="active site" description="For leader protease activity" evidence="35 42">
    <location>
        <position position="148"/>
    </location>
</feature>
<feature type="active site" description="For leader protease activity" evidence="35">
    <location>
        <position position="163"/>
    </location>
</feature>
<feature type="active site" description="For protease 3C activity; Proton donor/acceptor" evidence="12">
    <location>
        <position position="1695"/>
    </location>
</feature>
<feature type="active site" description="For protease 3C activity" evidence="12">
    <location>
        <position position="1733"/>
    </location>
</feature>
<feature type="active site" description="For protease 3C activity" evidence="12">
    <location>
        <position position="1812"/>
    </location>
</feature>
<feature type="active site" description="For RdRp activity" evidence="8">
    <location>
        <position position="2200"/>
    </location>
</feature>
<feature type="binding site" evidence="11">
    <location>
        <begin position="1217"/>
        <end position="1224"/>
    </location>
    <ligand>
        <name>ATP</name>
        <dbReference type="ChEBI" id="CHEBI:30616"/>
    </ligand>
</feature>
<feature type="site" description="Cleavage; by leader protease" evidence="9">
    <location>
        <begin position="201"/>
        <end position="202"/>
    </location>
</feature>
<feature type="site" description="Cleavage" evidence="9">
    <location>
        <begin position="286"/>
        <end position="287"/>
    </location>
</feature>
<feature type="site" description="Cleavage; by picornain 3C" evidence="9">
    <location>
        <begin position="504"/>
        <end position="505"/>
    </location>
</feature>
<feature type="site" description="Cleavage; by picornain 3C" evidence="9">
    <location>
        <begin position="724"/>
        <end position="725"/>
    </location>
</feature>
<feature type="site" description="Cleavage; by picornain 3C" evidence="9">
    <location>
        <begin position="935"/>
        <end position="936"/>
    </location>
</feature>
<feature type="site" description="Cleavage; by ribosomal skip" evidence="15">
    <location>
        <begin position="953"/>
        <end position="954"/>
    </location>
</feature>
<feature type="site" description="Cleavage; by picornain 3C" evidence="9">
    <location>
        <begin position="1107"/>
        <end position="1108"/>
    </location>
</feature>
<feature type="site" description="Cleavage; by picornain 3C" evidence="9">
    <location>
        <begin position="1425"/>
        <end position="1426"/>
    </location>
</feature>
<feature type="site" description="Cleavage; by picornain 3C" evidence="9">
    <location>
        <begin position="1578"/>
        <end position="1579"/>
    </location>
</feature>
<feature type="site" description="Cleavage; by picornain 3C" evidence="9">
    <location>
        <begin position="1601"/>
        <end position="1602"/>
    </location>
</feature>
<feature type="site" description="Cleavage; by picornain 3C" evidence="9">
    <location>
        <begin position="1625"/>
        <end position="1626"/>
    </location>
</feature>
<feature type="site" description="Cleavage; by picornain 3C" evidence="9">
    <location>
        <begin position="1649"/>
        <end position="1650"/>
    </location>
</feature>
<feature type="site" description="Cleavage; by picornain 3C" evidence="9">
    <location>
        <begin position="1862"/>
        <end position="1863"/>
    </location>
</feature>
<feature type="modified residue" description="O-(5'-phospho-RNA)-tyrosine" evidence="44">
    <location>
        <position position="1581"/>
    </location>
</feature>
<feature type="modified residue" description="O-(5'-phospho-RNA)-tyrosine" evidence="44">
    <location>
        <position position="1604"/>
    </location>
</feature>
<feature type="modified residue" description="O-(5'-phospho-RNA)-tyrosine" evidence="44">
    <location>
        <position position="1628"/>
    </location>
</feature>
<feature type="lipid moiety-binding region" description="N-myristoyl glycine; by host" evidence="7">
    <location>
        <position position="202"/>
    </location>
</feature>
<feature type="disulfide bond" description="Interchain (between VP2 and VP1 chains)" evidence="40">
    <location>
        <begin position="406"/>
        <end position="858"/>
    </location>
</feature>
<feature type="disulfide bond" description="Interchain; in VP3 dimer" evidence="45">
    <location>
        <position position="511"/>
    </location>
</feature>
<feature type="splice variant" id="VSP_018982" description="In isoform Lb." evidence="43">
    <location>
        <begin position="1"/>
        <end position="28"/>
    </location>
</feature>
<feature type="sequence variant" description="In strain: Isolate O1/UK/BFS/1968." evidence="21">
    <original>S</original>
    <variation>P</variation>
    <location>
        <position position="23"/>
    </location>
</feature>
<feature type="sequence variant" description="In strain: Isolate O1/UK/BFS/1968." evidence="21">
    <original>Y</original>
    <variation>C</variation>
    <location>
        <position position="416"/>
    </location>
</feature>
<feature type="sequence variant" description="In strain: Isolate O1/UK/BFS/1968." evidence="21">
    <original>Q</original>
    <variation>H</variation>
    <location>
        <position position="589"/>
    </location>
</feature>
<feature type="sequence variant" description="In strain: Isolate O1/UK/BFS/1968." evidence="21">
    <original>V</original>
    <variation>I</variation>
    <location>
        <position position="627"/>
    </location>
</feature>
<feature type="sequence variant" description="In strain: Isolate O1/UK/BFS/1968." evidence="21">
    <original>G</original>
    <variation>D</variation>
    <location>
        <position position="677"/>
    </location>
</feature>
<feature type="sequence variant" description="In strain: Isolate O1/UK/BFS/1968." evidence="21">
    <original>I</original>
    <variation>V</variation>
    <location>
        <position position="780"/>
    </location>
</feature>
<feature type="sequence variant" description="In strain: Isolate O1/UK/BFS/1968." evidence="21">
    <original>N</original>
    <variation>S</variation>
    <location>
        <position position="861"/>
    </location>
</feature>
<feature type="sequence variant" description="In strain: Isolate O1/UK/BFS/1968." evidence="21">
    <original>T</original>
    <variation>A</variation>
    <location>
        <position position="1236"/>
    </location>
</feature>
<feature type="sequence variant" description="In strain: Isolate O1/UK/BFS/1968." evidence="21">
    <original>I</original>
    <variation>T</variation>
    <location>
        <position position="1242"/>
    </location>
</feature>
<feature type="sequence variant" description="In strain: Isolate O1/UK/BFS/1968." evidence="21">
    <original>S</original>
    <variation>N</variation>
    <location>
        <position position="1350"/>
    </location>
</feature>
<feature type="sequence variant" description="In strain: Isolate O1/UK/BFS/1968." evidence="21">
    <original>A</original>
    <variation>T</variation>
    <location>
        <position position="1363"/>
    </location>
</feature>
<feature type="sequence variant" description="In strain: Isolate O1/UK/BFS/1968." evidence="21">
    <original>RPLI</original>
    <variation>QPLL</variation>
    <location>
        <begin position="1464"/>
        <end position="1467"/>
    </location>
</feature>
<feature type="sequence variant" description="In strain: Isolate O1/UK/BFS/1968." evidence="21">
    <original>I</original>
    <variation>V</variation>
    <location>
        <position position="1501"/>
    </location>
</feature>
<feature type="sequence variant" description="In strain: Isolate O1/UK/BFS/1968." evidence="21">
    <original>V</original>
    <variation>L</variation>
    <location>
        <position position="1706"/>
    </location>
</feature>
<feature type="sequence variant" description="In strain: Isolate O1/UK/BFS/1968." evidence="21">
    <original>V</original>
    <variation>A</variation>
    <location>
        <position position="2020"/>
    </location>
</feature>
<feature type="sequence variant" description="In strain: Isolate O1/UK/BFS/1968." evidence="21">
    <original>L</original>
    <variation>M</variation>
    <location>
        <position position="2032"/>
    </location>
</feature>
<feature type="sequence variant" description="In strain: Isolate O1/UK/BFS/1968." evidence="21">
    <original>G</original>
    <variation>E</variation>
    <location>
        <position position="2155"/>
    </location>
</feature>
<feature type="mutagenesis site" description="Complete loss of ATPase activity." evidence="23">
    <original>K</original>
    <variation>A</variation>
    <location>
        <position position="1223"/>
    </location>
</feature>
<feature type="mutagenesis site" description="Complete loss of ATPase activity." evidence="23">
    <original>D</original>
    <variation>A</variation>
    <location>
        <position position="1267"/>
    </location>
</feature>
<feature type="mutagenesis site" description="Complete loss of ATPase activity." evidence="23">
    <original>N</original>
    <variation>A</variation>
    <location>
        <position position="1314"/>
    </location>
</feature>
<feature type="sequence conflict" description="In Ref. 3." evidence="43" ref="3">
    <original>G</original>
    <variation>R</variation>
    <location>
        <position position="808"/>
    </location>
</feature>
<feature type="strand" evidence="57">
    <location>
        <begin position="30"/>
        <end position="33"/>
    </location>
</feature>
<feature type="strand" evidence="57">
    <location>
        <begin position="38"/>
        <end position="40"/>
    </location>
</feature>
<feature type="strand" evidence="57">
    <location>
        <begin position="47"/>
        <end position="49"/>
    </location>
</feature>
<feature type="helix" evidence="57">
    <location>
        <begin position="51"/>
        <end position="63"/>
    </location>
</feature>
<feature type="helix" evidence="53">
    <location>
        <begin position="66"/>
        <end position="68"/>
    </location>
</feature>
<feature type="helix" evidence="57">
    <location>
        <begin position="69"/>
        <end position="72"/>
    </location>
</feature>
<feature type="strand" evidence="56">
    <location>
        <begin position="73"/>
        <end position="76"/>
    </location>
</feature>
<feature type="helix" evidence="57">
    <location>
        <begin position="79"/>
        <end position="90"/>
    </location>
</feature>
<feature type="helix" evidence="57">
    <location>
        <begin position="100"/>
        <end position="107"/>
    </location>
</feature>
<feature type="helix" evidence="57">
    <location>
        <begin position="108"/>
        <end position="110"/>
    </location>
</feature>
<feature type="strand" evidence="55">
    <location>
        <begin position="111"/>
        <end position="113"/>
    </location>
</feature>
<feature type="strand" evidence="57">
    <location>
        <begin position="115"/>
        <end position="120"/>
    </location>
</feature>
<feature type="strand" evidence="57">
    <location>
        <begin position="123"/>
        <end position="126"/>
    </location>
</feature>
<feature type="strand" evidence="56">
    <location>
        <begin position="129"/>
        <end position="131"/>
    </location>
</feature>
<feature type="helix" evidence="57">
    <location>
        <begin position="134"/>
        <end position="136"/>
    </location>
</feature>
<feature type="strand" evidence="57">
    <location>
        <begin position="137"/>
        <end position="143"/>
    </location>
</feature>
<feature type="strand" evidence="57">
    <location>
        <begin position="145"/>
        <end position="147"/>
    </location>
</feature>
<feature type="strand" evidence="57">
    <location>
        <begin position="149"/>
        <end position="155"/>
    </location>
</feature>
<feature type="strand" evidence="57">
    <location>
        <begin position="158"/>
        <end position="163"/>
    </location>
</feature>
<feature type="strand" evidence="57">
    <location>
        <begin position="166"/>
        <end position="169"/>
    </location>
</feature>
<feature type="helix" evidence="57">
    <location>
        <begin position="174"/>
        <end position="176"/>
    </location>
</feature>
<feature type="strand" evidence="57">
    <location>
        <begin position="177"/>
        <end position="182"/>
    </location>
</feature>
<feature type="turn" evidence="53">
    <location>
        <begin position="195"/>
        <end position="197"/>
    </location>
</feature>
<feature type="helix" evidence="54">
    <location>
        <begin position="229"/>
        <end position="232"/>
    </location>
</feature>
<feature type="helix" evidence="54">
    <location>
        <begin position="268"/>
        <end position="274"/>
    </location>
</feature>
<feature type="helix" evidence="54">
    <location>
        <begin position="297"/>
        <end position="299"/>
    </location>
</feature>
<feature type="strand" evidence="54">
    <location>
        <begin position="301"/>
        <end position="305"/>
    </location>
</feature>
<feature type="strand" evidence="54">
    <location>
        <begin position="308"/>
        <end position="314"/>
    </location>
</feature>
<feature type="helix" evidence="54">
    <location>
        <begin position="332"/>
        <end position="334"/>
    </location>
</feature>
<feature type="helix" evidence="54">
    <location>
        <begin position="342"/>
        <end position="344"/>
    </location>
</feature>
<feature type="strand" evidence="54">
    <location>
        <begin position="348"/>
        <end position="355"/>
    </location>
</feature>
<feature type="strand" evidence="54">
    <location>
        <begin position="364"/>
        <end position="370"/>
    </location>
</feature>
<feature type="helix" evidence="54">
    <location>
        <begin position="376"/>
        <end position="383"/>
    </location>
</feature>
<feature type="strand" evidence="54">
    <location>
        <begin position="384"/>
        <end position="397"/>
    </location>
</feature>
<feature type="strand" evidence="54">
    <location>
        <begin position="404"/>
        <end position="413"/>
    </location>
</feature>
<feature type="helix" evidence="54">
    <location>
        <begin position="421"/>
        <end position="428"/>
    </location>
</feature>
<feature type="strand" evidence="54">
    <location>
        <begin position="429"/>
        <end position="434"/>
    </location>
</feature>
<feature type="turn" evidence="54">
    <location>
        <begin position="436"/>
        <end position="438"/>
    </location>
</feature>
<feature type="strand" evidence="54">
    <location>
        <begin position="440"/>
        <end position="446"/>
    </location>
</feature>
<feature type="strand" evidence="54">
    <location>
        <begin position="451"/>
        <end position="455"/>
    </location>
</feature>
<feature type="turn" evidence="54">
    <location>
        <begin position="457"/>
        <end position="459"/>
    </location>
</feature>
<feature type="strand" evidence="54">
    <location>
        <begin position="463"/>
        <end position="474"/>
    </location>
</feature>
<feature type="turn" evidence="54">
    <location>
        <begin position="476"/>
        <end position="478"/>
    </location>
</feature>
<feature type="strand" evidence="54">
    <location>
        <begin position="483"/>
        <end position="499"/>
    </location>
</feature>
<feature type="helix" evidence="54">
    <location>
        <begin position="548"/>
        <end position="554"/>
    </location>
</feature>
<feature type="turn" evidence="54">
    <location>
        <begin position="562"/>
        <end position="564"/>
    </location>
</feature>
<feature type="strand" evidence="54">
    <location>
        <begin position="565"/>
        <end position="569"/>
    </location>
</feature>
<feature type="strand" evidence="54">
    <location>
        <begin position="577"/>
        <end position="583"/>
    </location>
</feature>
<feature type="helix" evidence="54">
    <location>
        <begin position="588"/>
        <end position="590"/>
    </location>
</feature>
<feature type="helix" evidence="54">
    <location>
        <begin position="594"/>
        <end position="599"/>
    </location>
</feature>
<feature type="strand" evidence="54">
    <location>
        <begin position="602"/>
        <end position="607"/>
    </location>
</feature>
<feature type="strand" evidence="54">
    <location>
        <begin position="609"/>
        <end position="615"/>
    </location>
</feature>
<feature type="strand" evidence="54">
    <location>
        <begin position="622"/>
        <end position="630"/>
    </location>
</feature>
<feature type="helix" evidence="54">
    <location>
        <begin position="640"/>
        <end position="643"/>
    </location>
</feature>
<feature type="strand" evidence="54">
    <location>
        <begin position="646"/>
        <end position="652"/>
    </location>
</feature>
<feature type="strand" evidence="54">
    <location>
        <begin position="658"/>
        <end position="663"/>
    </location>
</feature>
<feature type="strand" evidence="54">
    <location>
        <begin position="668"/>
        <end position="670"/>
    </location>
</feature>
<feature type="strand" evidence="54">
    <location>
        <begin position="672"/>
        <end position="675"/>
    </location>
</feature>
<feature type="strand" evidence="54">
    <location>
        <begin position="687"/>
        <end position="697"/>
    </location>
</feature>
<feature type="strand" evidence="54">
    <location>
        <begin position="702"/>
        <end position="709"/>
    </location>
</feature>
<feature type="strand" evidence="54">
    <location>
        <begin position="714"/>
        <end position="718"/>
    </location>
</feature>
<feature type="helix" evidence="54">
    <location>
        <begin position="739"/>
        <end position="742"/>
    </location>
</feature>
<feature type="helix" evidence="54">
    <location>
        <begin position="752"/>
        <end position="754"/>
    </location>
</feature>
<feature type="helix" evidence="54">
    <location>
        <begin position="756"/>
        <end position="760"/>
    </location>
</feature>
<feature type="strand" evidence="54">
    <location>
        <begin position="762"/>
        <end position="766"/>
    </location>
</feature>
<feature type="helix" evidence="54">
    <location>
        <begin position="777"/>
        <end position="779"/>
    </location>
</feature>
<feature type="helix" evidence="54">
    <location>
        <begin position="785"/>
        <end position="791"/>
    </location>
</feature>
<feature type="strand" evidence="54">
    <location>
        <begin position="793"/>
        <end position="808"/>
    </location>
</feature>
<feature type="strand" evidence="54">
    <location>
        <begin position="810"/>
        <end position="813"/>
    </location>
</feature>
<feature type="helix" evidence="54">
    <location>
        <begin position="819"/>
        <end position="823"/>
    </location>
</feature>
<feature type="strand" evidence="54">
    <location>
        <begin position="827"/>
        <end position="830"/>
    </location>
</feature>
<feature type="strand" evidence="54">
    <location>
        <begin position="837"/>
        <end position="841"/>
    </location>
</feature>
<feature type="strand" evidence="54">
    <location>
        <begin position="846"/>
        <end position="852"/>
    </location>
</feature>
<feature type="strand" evidence="54">
    <location>
        <begin position="891"/>
        <end position="893"/>
    </location>
</feature>
<feature type="strand" evidence="54">
    <location>
        <begin position="895"/>
        <end position="912"/>
    </location>
</feature>
<feature type="strand" evidence="54">
    <location>
        <begin position="921"/>
        <end position="924"/>
    </location>
</feature>
<sequence length="2332" mass="258927">MNTTDCFIALVQAIREIKALFLSRTTGKMELTLYNGEKKTFYSRPNNHDNCWLNAILQLFRYVEEPFFDWVYSSPENLTLEAIKQLEDLTGLELHEGGPPALVIWNIKHLLHTGIGTASRPSEVCMVDGTDMCLADFHAGIFLKGQEHAVFACVTSNGWYAIDDEDFYPWTPDPSDVLVFVPYDQEPLNGEWKAKVQRKLKGAGQSSPATGSQNQSGNTGSIINNYYMQQYQNSMDTQLGDNAISGGSNEGSTDTTSTHTTNTQNNDWFSKLASSAFSGLFGALLADKKTEETTLLEDRILTTRNGHTTSTTQSSVGVTYGYATAEDFVSGPNTSGLETRVVQAERFFKTHLFDWVTSDSFGRCHLLELPTDHKGVYGSLTDSYAYMRNGWDVEVTAVGNQFNGGCLLVAMVPELYSIQKRELYQLTLFPHQFINPRTNMTAHITVPFVGVNRYDQYKVHKPWTLVVMVVAPLTVNTEGAPQIKVYANIAPTNVHVAGEFPSKEGIFPVACSDGYGGLVTTDPKTADPVYGKVFNPPRNQLPGRFTNLLDVAEACPTFLRFEGGVPYVTTKTDSDRVLAQFDMSLAAKQMSNTFLAGLAQYYTQYSGTINLHFMFTGPTDAKARYMVAYAPPGMEPPKTPEAAAHCIHAEWDTGLNSKFTFSIPYLSAADYAYTASGVAETTNVQGWVCLFQITHGKADGDALVVLASAGKDFELRLPVDARAETTSAGESADPVTTTVENYGGETQIQRRQHTDVSFIMDRFVKVTPQNQINILDLMQIPSHTLVGALLRASTYYFSDLEIAVKHEGDLTWVPNGAPEKALDNTTNPTAYHKAPLTRLALPYTAPHRVLATVYNGECRYNRNAVPNLRGDLQVLAQKVARTLPTSFNYGAIKATRVTELLYRMKRAETYCPRPLLAIHPTEARHKQKIVAPVKQTLNFDLLKLAGDVESNPGPFFFSDVRSNFSKLVETINQMQEDMSTKHGPDFNRLVSAFEELAIGVKAIRTGLDEAKPWYKLIKLLSRLSCMAAVAARSKDPVLVAIMLADTGLEILDSTFVVKKISDSLSSLFHVPAPVFSFGAPVLLAGLVKVASSFFRSTPEDLERAEKQLKARDINDIFAILKNGEWLVKLILAIRDWIKAWIASEEKFVTMTDLVPGILEKQRDLNDPSKYKEAKEWLDNARQACLKSGNVHIANLCKVVAPAPSKSRPEPVVVCLRGKSGQGKSFLANVLAQAISTHFTGRIDSVWYCPPDPDHFDGYNQQTVVVMDDLGQNPDGKDFKYFAQMVSTTGFIPPMASLEDKGKPFNSKVIIATTNLYSGFTPRTMVCPDALNRRFHFDIDVSAKDGYKINSKLDIIKALEDTHANPVAMFQYDCALLNGMAVEMKRMQQDMFKPQPPLQNVYQLVQEVIDRVELHEKVSSHPIFKQISIPSQKSVLYFLIEKGQHEAAIEFFEGMVHDSIKEELRPLIQQTSFVKRAFKRLKENFEIVALCLTLLANIVIMIRETRKRQKMVDDAVNEYIEKANITTDDKTLDEAEKSPLETSGASTVGFRERTLPGQKACDDVNSEPAQPVEEQPQAEGPYAGPLERQKPLKVRAKLPQQEGPYAGPMERQKPLKVKAKAPVVKEGPYEGPVKKPVALKVKAKNLIVTESGAPPTDLQKMVMGNTKPVELILDGKTVAICCATGVFGTAYLVPRHLFAEKYDKIMVDGRAMTDSDYRVFEFEIKVKGQDMLSDAALMVLHRGNRVRDITKHFRDTARMKKGTPVVGVINNADVGRLIFSGEALTYKDIVVCMDGDTMPGLFAYRAATKAGYCGGAVLAKDGADTFIVGTHSAGGNGVGYCSCVSRSMLLKMKAHIDPEPHHEGLIVDTRDVEERVHVMRKTKLAPTVAHGVFNPEFGPAALSNKDPRLNEGVVLDEVIFSKHKGDTKMSEEDKALFRRCAADYASRLHSVLGTANAPLSIYEAIKGVDGLDAMEPDTAPGLPWALQGKRRGALIDFENGTVGPEVEAALKLMEKREYKFVCQTFLKDEIRPLEKVRAGKTRIVDVLPVEHILYTRMMIGRFCAQMHSNNGPQIGSAVGCNPDVDWQRFGTHFAQYRNVWDVDYSAFDANHCSDAMNIMFEEVFRTEFGFHPNAEWILKTLVNTEHAYENKRITVGGGMPSGCSATSIINTILNNIYVLYALRRHYEGVELDTYTMISYGDDIVVASDYDLDFEALKPHFKSLGQTITPADKSDKGFVLGHSITDVTFLKRHFHMDYGTGFYKPVMASKTLEAILSFARRGTIQEKLISVAGLAVHSGPDEYRRLFEPFQGLFEIPSYRSLYLRWVNAVCGDA</sequence>
<name>POLG_FMDVO</name>
<dbReference type="EC" id="3.4.22.46" evidence="14"/>
<dbReference type="EC" id="3.6.1.15" evidence="23"/>
<dbReference type="EC" id="3.4.22.28" evidence="37"/>
<dbReference type="EC" id="2.7.7.48"/>
<dbReference type="EMBL" id="X00871">
    <property type="protein sequence ID" value="CAA25416.1"/>
    <property type="molecule type" value="Genomic_RNA"/>
</dbReference>
<dbReference type="EMBL" id="EU448370">
    <property type="protein sequence ID" value="ACC63450.1"/>
    <property type="molecule type" value="Genomic_RNA"/>
</dbReference>
<dbReference type="EMBL" id="J02185">
    <property type="protein sequence ID" value="AAA42635.1"/>
    <property type="molecule type" value="Genomic_RNA"/>
</dbReference>
<dbReference type="PDB" id="1QMY">
    <property type="method" value="X-ray"/>
    <property type="resolution" value="1.90 A"/>
    <property type="chains" value="A/B/C=29-195"/>
</dbReference>
<dbReference type="PDB" id="1QOL">
    <property type="method" value="X-ray"/>
    <property type="resolution" value="3.00 A"/>
    <property type="chains" value="A/B/C/D/E/F/G/H=29-201"/>
</dbReference>
<dbReference type="PDB" id="1QQP">
    <property type="method" value="X-ray"/>
    <property type="resolution" value="1.90 A"/>
    <property type="chains" value="1=725-937, 2=287-504, 3=505-724, 4=202-286"/>
</dbReference>
<dbReference type="PDB" id="2JQF">
    <property type="method" value="NMR"/>
    <property type="chains" value="R/S=29-201"/>
</dbReference>
<dbReference type="PDB" id="2JQG">
    <property type="method" value="NMR"/>
    <property type="chains" value="R=29-195"/>
</dbReference>
<dbReference type="PDB" id="4QBB">
    <property type="method" value="X-ray"/>
    <property type="resolution" value="1.60 A"/>
    <property type="chains" value="A/B/C=29-195"/>
</dbReference>
<dbReference type="PDB" id="6FFA">
    <property type="method" value="X-ray"/>
    <property type="resolution" value="1.50 A"/>
    <property type="chains" value="A=29-195"/>
</dbReference>
<dbReference type="PDBsum" id="1QMY"/>
<dbReference type="PDBsum" id="1QOL"/>
<dbReference type="PDBsum" id="1QQP"/>
<dbReference type="PDBsum" id="2JQF"/>
<dbReference type="PDBsum" id="2JQG"/>
<dbReference type="PDBsum" id="4QBB"/>
<dbReference type="PDBsum" id="6FFA"/>
<dbReference type="BMRB" id="P03305"/>
<dbReference type="SMR" id="P03305"/>
<dbReference type="ELM" id="P03305"/>
<dbReference type="MEROPS" id="C03.008"/>
<dbReference type="TCDB" id="1.A.85.1.8">
    <property type="family name" value="the poliovirus 2b viroporin (2b viroporin) family"/>
</dbReference>
<dbReference type="UniLectin" id="P03305"/>
<dbReference type="KEGG" id="ag:CAA25416"/>
<dbReference type="BRENDA" id="3.4.22.46">
    <property type="organism ID" value="2315"/>
</dbReference>
<dbReference type="EvolutionaryTrace" id="P03305"/>
<dbReference type="Proteomes" id="UP000008765">
    <property type="component" value="Genome"/>
</dbReference>
<dbReference type="Proteomes" id="UP000120328">
    <property type="component" value="Genome"/>
</dbReference>
<dbReference type="GO" id="GO:0044162">
    <property type="term" value="C:host cell cytoplasmic vesicle membrane"/>
    <property type="evidence" value="ECO:0007669"/>
    <property type="project" value="UniProtKB-SubCell"/>
</dbReference>
<dbReference type="GO" id="GO:0044167">
    <property type="term" value="C:host cell endoplasmic reticulum membrane"/>
    <property type="evidence" value="ECO:0007669"/>
    <property type="project" value="UniProtKB-SubCell"/>
</dbReference>
<dbReference type="GO" id="GO:0042025">
    <property type="term" value="C:host cell nucleus"/>
    <property type="evidence" value="ECO:0000314"/>
    <property type="project" value="UniProt"/>
</dbReference>
<dbReference type="GO" id="GO:0016020">
    <property type="term" value="C:membrane"/>
    <property type="evidence" value="ECO:0007669"/>
    <property type="project" value="UniProtKB-KW"/>
</dbReference>
<dbReference type="GO" id="GO:0039618">
    <property type="term" value="C:T=pseudo3 icosahedral viral capsid"/>
    <property type="evidence" value="ECO:0007669"/>
    <property type="project" value="UniProtKB-KW"/>
</dbReference>
<dbReference type="GO" id="GO:0005524">
    <property type="term" value="F:ATP binding"/>
    <property type="evidence" value="ECO:0007669"/>
    <property type="project" value="UniProtKB-KW"/>
</dbReference>
<dbReference type="GO" id="GO:0015267">
    <property type="term" value="F:channel activity"/>
    <property type="evidence" value="ECO:0007669"/>
    <property type="project" value="UniProtKB-KW"/>
</dbReference>
<dbReference type="GO" id="GO:0004197">
    <property type="term" value="F:cysteine-type endopeptidase activity"/>
    <property type="evidence" value="ECO:0007669"/>
    <property type="project" value="UniProtKB-EC"/>
</dbReference>
<dbReference type="GO" id="GO:0060090">
    <property type="term" value="F:molecular adaptor activity"/>
    <property type="evidence" value="ECO:0000314"/>
    <property type="project" value="UniProt"/>
</dbReference>
<dbReference type="GO" id="GO:0017111">
    <property type="term" value="F:ribonucleoside triphosphate phosphatase activity"/>
    <property type="evidence" value="ECO:0007669"/>
    <property type="project" value="UniProtKB-EC"/>
</dbReference>
<dbReference type="GO" id="GO:0003723">
    <property type="term" value="F:RNA binding"/>
    <property type="evidence" value="ECO:0007669"/>
    <property type="project" value="UniProtKB-KW"/>
</dbReference>
<dbReference type="GO" id="GO:0003724">
    <property type="term" value="F:RNA helicase activity"/>
    <property type="evidence" value="ECO:0007669"/>
    <property type="project" value="InterPro"/>
</dbReference>
<dbReference type="GO" id="GO:0003968">
    <property type="term" value="F:RNA-directed RNA polymerase activity"/>
    <property type="evidence" value="ECO:0007669"/>
    <property type="project" value="UniProtKB-KW"/>
</dbReference>
<dbReference type="GO" id="GO:0005198">
    <property type="term" value="F:structural molecule activity"/>
    <property type="evidence" value="ECO:0007669"/>
    <property type="project" value="InterPro"/>
</dbReference>
<dbReference type="GO" id="GO:0075512">
    <property type="term" value="P:clathrin-dependent endocytosis of virus by host cell"/>
    <property type="evidence" value="ECO:0007669"/>
    <property type="project" value="UniProtKB-KW"/>
</dbReference>
<dbReference type="GO" id="GO:0006351">
    <property type="term" value="P:DNA-templated transcription"/>
    <property type="evidence" value="ECO:0007669"/>
    <property type="project" value="InterPro"/>
</dbReference>
<dbReference type="GO" id="GO:0034220">
    <property type="term" value="P:monoatomic ion transmembrane transport"/>
    <property type="evidence" value="ECO:0007669"/>
    <property type="project" value="UniProtKB-KW"/>
</dbReference>
<dbReference type="GO" id="GO:0006508">
    <property type="term" value="P:proteolysis"/>
    <property type="evidence" value="ECO:0007669"/>
    <property type="project" value="UniProtKB-KW"/>
</dbReference>
<dbReference type="GO" id="GO:0006417">
    <property type="term" value="P:regulation of translation"/>
    <property type="evidence" value="ECO:0007669"/>
    <property type="project" value="UniProtKB-KW"/>
</dbReference>
<dbReference type="GO" id="GO:0039520">
    <property type="term" value="P:symbiont-mediated activation of host autophagy"/>
    <property type="evidence" value="ECO:0000314"/>
    <property type="project" value="UniProtKB"/>
</dbReference>
<dbReference type="GO" id="GO:0039525">
    <property type="term" value="P:symbiont-mediated perturbation of host chromatin organization"/>
    <property type="evidence" value="ECO:0007669"/>
    <property type="project" value="UniProtKB-KW"/>
</dbReference>
<dbReference type="GO" id="GO:0039502">
    <property type="term" value="P:symbiont-mediated suppression of host type I interferon-mediated signaling pathway"/>
    <property type="evidence" value="ECO:0000314"/>
    <property type="project" value="UniProt"/>
</dbReference>
<dbReference type="GO" id="GO:0019082">
    <property type="term" value="P:viral protein processing"/>
    <property type="evidence" value="ECO:0007669"/>
    <property type="project" value="InterPro"/>
</dbReference>
<dbReference type="GO" id="GO:0039694">
    <property type="term" value="P:viral RNA genome replication"/>
    <property type="evidence" value="ECO:0007669"/>
    <property type="project" value="InterPro"/>
</dbReference>
<dbReference type="GO" id="GO:0019062">
    <property type="term" value="P:virion attachment to host cell"/>
    <property type="evidence" value="ECO:0007669"/>
    <property type="project" value="UniProtKB-KW"/>
</dbReference>
<dbReference type="CDD" id="cd23210">
    <property type="entry name" value="Aphthovirus_RdRp"/>
    <property type="match status" value="1"/>
</dbReference>
<dbReference type="CDD" id="cd00205">
    <property type="entry name" value="rhv_like"/>
    <property type="match status" value="3"/>
</dbReference>
<dbReference type="FunFam" id="1.20.960.20:FF:000002">
    <property type="entry name" value="Genome polyprotein"/>
    <property type="match status" value="1"/>
</dbReference>
<dbReference type="FunFam" id="2.40.10.10:FF:000108">
    <property type="entry name" value="Genome polyprotein"/>
    <property type="match status" value="1"/>
</dbReference>
<dbReference type="FunFam" id="2.60.120.20:FF:000005">
    <property type="entry name" value="Genome polyprotein"/>
    <property type="match status" value="1"/>
</dbReference>
<dbReference type="FunFam" id="2.60.120.20:FF:000006">
    <property type="entry name" value="Genome polyprotein"/>
    <property type="match status" value="1"/>
</dbReference>
<dbReference type="FunFam" id="2.60.120.20:FF:000012">
    <property type="entry name" value="Genome polyprotein"/>
    <property type="match status" value="1"/>
</dbReference>
<dbReference type="FunFam" id="3.30.70.270:FF:000031">
    <property type="entry name" value="Genome polyprotein"/>
    <property type="match status" value="1"/>
</dbReference>
<dbReference type="Gene3D" id="1.20.960.20">
    <property type="match status" value="1"/>
</dbReference>
<dbReference type="Gene3D" id="2.60.120.20">
    <property type="match status" value="3"/>
</dbReference>
<dbReference type="Gene3D" id="3.30.70.270">
    <property type="match status" value="2"/>
</dbReference>
<dbReference type="Gene3D" id="4.10.90.10">
    <property type="entry name" value="Capsid protein VP4 superfamily, Picornavirus"/>
    <property type="match status" value="1"/>
</dbReference>
<dbReference type="Gene3D" id="3.90.70.10">
    <property type="entry name" value="Cysteine proteinases"/>
    <property type="match status" value="1"/>
</dbReference>
<dbReference type="Gene3D" id="2.40.10.10">
    <property type="entry name" value="Trypsin-like serine proteases"/>
    <property type="match status" value="2"/>
</dbReference>
<dbReference type="InterPro" id="IPR015031">
    <property type="entry name" value="Capsid_VP4_Picornavir"/>
</dbReference>
<dbReference type="InterPro" id="IPR037080">
    <property type="entry name" value="Capsid_VP4_sf_Picornavirus"/>
</dbReference>
<dbReference type="InterPro" id="IPR043502">
    <property type="entry name" value="DNA/RNA_pol_sf"/>
</dbReference>
<dbReference type="InterPro" id="IPR004080">
    <property type="entry name" value="FMDV_VP1_coat"/>
</dbReference>
<dbReference type="InterPro" id="IPR004004">
    <property type="entry name" value="Helic/Pol/Pept_Calicivir-typ"/>
</dbReference>
<dbReference type="InterPro" id="IPR000605">
    <property type="entry name" value="Helicase_SF3_ssDNA/RNA_vir"/>
</dbReference>
<dbReference type="InterPro" id="IPR014759">
    <property type="entry name" value="Helicase_SF3_ssRNA_vir"/>
</dbReference>
<dbReference type="InterPro" id="IPR027417">
    <property type="entry name" value="P-loop_NTPase"/>
</dbReference>
<dbReference type="InterPro" id="IPR038765">
    <property type="entry name" value="Papain-like_cys_pep_sf"/>
</dbReference>
<dbReference type="InterPro" id="IPR044067">
    <property type="entry name" value="PCV_3C_PRO"/>
</dbReference>
<dbReference type="InterPro" id="IPR008739">
    <property type="entry name" value="Peptidase_C28"/>
</dbReference>
<dbReference type="InterPro" id="IPR000199">
    <property type="entry name" value="Peptidase_C3A/C3B_picornavir"/>
</dbReference>
<dbReference type="InterPro" id="IPR009003">
    <property type="entry name" value="Peptidase_S1_PA"/>
</dbReference>
<dbReference type="InterPro" id="IPR043504">
    <property type="entry name" value="Peptidase_S1_PA_chymotrypsin"/>
</dbReference>
<dbReference type="InterPro" id="IPR001676">
    <property type="entry name" value="Picornavirus_capsid"/>
</dbReference>
<dbReference type="InterPro" id="IPR043128">
    <property type="entry name" value="Rev_trsase/Diguanyl_cyclase"/>
</dbReference>
<dbReference type="InterPro" id="IPR033703">
    <property type="entry name" value="Rhv-like"/>
</dbReference>
<dbReference type="InterPro" id="IPR001205">
    <property type="entry name" value="RNA-dir_pol_C"/>
</dbReference>
<dbReference type="InterPro" id="IPR007094">
    <property type="entry name" value="RNA-dir_pol_PSvirus"/>
</dbReference>
<dbReference type="InterPro" id="IPR029053">
    <property type="entry name" value="Viral_coat"/>
</dbReference>
<dbReference type="Pfam" id="PF05408">
    <property type="entry name" value="Peptidase_C28"/>
    <property type="match status" value="1"/>
</dbReference>
<dbReference type="Pfam" id="PF00548">
    <property type="entry name" value="Peptidase_C3"/>
    <property type="match status" value="1"/>
</dbReference>
<dbReference type="Pfam" id="PF00680">
    <property type="entry name" value="RdRP_1"/>
    <property type="match status" value="1"/>
</dbReference>
<dbReference type="Pfam" id="PF00073">
    <property type="entry name" value="Rhv"/>
    <property type="match status" value="2"/>
</dbReference>
<dbReference type="Pfam" id="PF22663">
    <property type="entry name" value="Rhv_5"/>
    <property type="match status" value="1"/>
</dbReference>
<dbReference type="Pfam" id="PF00910">
    <property type="entry name" value="RNA_helicase"/>
    <property type="match status" value="1"/>
</dbReference>
<dbReference type="Pfam" id="PF08935">
    <property type="entry name" value="VP4_2"/>
    <property type="match status" value="1"/>
</dbReference>
<dbReference type="PRINTS" id="PR00918">
    <property type="entry name" value="CALICVIRUSNS"/>
</dbReference>
<dbReference type="PRINTS" id="PR01542">
    <property type="entry name" value="FMDVP1COAT"/>
</dbReference>
<dbReference type="SUPFAM" id="SSF54001">
    <property type="entry name" value="Cysteine proteinases"/>
    <property type="match status" value="1"/>
</dbReference>
<dbReference type="SUPFAM" id="SSF56672">
    <property type="entry name" value="DNA/RNA polymerases"/>
    <property type="match status" value="1"/>
</dbReference>
<dbReference type="SUPFAM" id="SSF52540">
    <property type="entry name" value="P-loop containing nucleoside triphosphate hydrolases"/>
    <property type="match status" value="1"/>
</dbReference>
<dbReference type="SUPFAM" id="SSF88633">
    <property type="entry name" value="Positive stranded ssRNA viruses"/>
    <property type="match status" value="2"/>
</dbReference>
<dbReference type="SUPFAM" id="SSF50494">
    <property type="entry name" value="Trypsin-like serine proteases"/>
    <property type="match status" value="1"/>
</dbReference>
<dbReference type="PROSITE" id="PS51887">
    <property type="entry name" value="APHTHOVIRUS_LPRO"/>
    <property type="match status" value="1"/>
</dbReference>
<dbReference type="PROSITE" id="PS51874">
    <property type="entry name" value="PCV_3C_PRO"/>
    <property type="match status" value="1"/>
</dbReference>
<dbReference type="PROSITE" id="PS50507">
    <property type="entry name" value="RDRP_SSRNA_POS"/>
    <property type="match status" value="1"/>
</dbReference>
<dbReference type="PROSITE" id="PS51218">
    <property type="entry name" value="SF3_HELICASE_2"/>
    <property type="match status" value="1"/>
</dbReference>
<comment type="function">
    <molecule>Leader protease</molecule>
    <text evidence="6 14 16 19 24 35 41">Autocatalytically cleaves itself from the polyprotein at the L/VP0 junction. Also cleaves the host translation initiation factors EIF4G1 and EIF4G3, in order to shut off the capped cellular mRNA transcription. Plays a role in counteracting host innate antiviral response using diverse mechanisms. Possesses a deubiquitinase activity acting on both 'Lys-48' and 'Lys-63'-linked polyubiquitin chains. In turn, inhibits the ubiquitination and subsequent activation of key signaling molecules of type I IFN response such as host RIGI, TBK1, TRAF3 and TRAF6. Inhibits host NF-kappa-B activity by inducing a decrease in RELA mRNA levels. Cleaves a peptide bond in the C-terminus of host ISG15, resulting in the damaging of this modifier that can no longer be attached to target proteins (PubMed:29463763). Also cleaves host G3BP1 and G3BP2 in order to inhibit cytoplasmic stress granules assembly.</text>
</comment>
<comment type="function">
    <molecule>Capsid protein VP4</molecule>
    <text evidence="3">Lies on the inner surface of the capsid shell. After binding to the host receptor, the capsid undergoes conformational changes. Capsid protein VP4 is released, capsid protein VP1 N-terminus is externalized, and together, they shape a pore in the host membrane through which the viral genome is translocated into the host cell cytoplasm. After genome has been released, the channel shrinks.</text>
</comment>
<comment type="function">
    <molecule>Capsid protein VP2</molecule>
    <text evidence="5 31">Forms an icosahedral capsid of pseudo T=3 symmetry with capsid proteins VP1 and VP3. The capsid is composed of 60 copies of each capsid protein organized in the form of twelve pentamers and encloses the viral positive strand RNA genome (PubMed:2537470). Upon acidifcation in the endosome, dissociates into pentamers (By similarity).</text>
</comment>
<comment type="function">
    <molecule>Capsid protein VP1</molecule>
    <text evidence="5 20 31 32 34 39">Forms an icosahedral capsid of pseudo T=3 symmetry with capsid proteins VP2 and VP3 (PubMed:2537470). The capsid is composed of 60 copies of each capsid protein organized in the form of twelve pentamers and encloses the viral positive strand RNA genome (PubMed:2537470). Mediates cell entry by attachment to an integrin receptor, usually host ITGAV/ITGB6, via a conserved arginine-glycine-aspartic acid (R-G-D) motif (PubMed:18045932, PubMed:2543752, PubMed:28534487). In addition, targets host MAVS to suppress type I IFN pathway (PubMed:33232374). Upon acidifcation in the endosome, dissociates into pentamers (By similarity).</text>
</comment>
<comment type="function">
    <molecule>Capsid protein VP3</molecule>
    <text evidence="5 31">Forms an icosahedral capsid of pseudo T=3 symmetry with capsid proteins VP0 and VP3. The capsid is composed of 60 copies of each capsid protein organized in the form of twelve pentamers and encloses the viral positive strand RNA genome (PubMed:2537470). Upon acidifcation in the endosome, dissociates into pentamers (By similarity).</text>
</comment>
<comment type="function">
    <molecule>Protein 2A</molecule>
    <text evidence="18">Mediates self-processing of the polyprotein by a translational effect termed 'ribosome skipping'. Mechanistically, 2A-mediated cleavage occurs between the C-terminal glycine and the proline of the downstream protein 2B. In the case of foot-and-mouth disease virus, the 2A oligopeptide is post-translationally 'trimmed' from the C-terminus of the upstream protein 1D by 3C proteinase.</text>
</comment>
<comment type="function">
    <molecule>Protein 2B</molecule>
    <text evidence="33">Plays an essential role in the virus replication cycle by acting as a viroporin. Creates a pore in the host endoplasmic reticulum and as a consequence releases Ca2+ in the cytoplasm of infected cell. In turn, high levels of cytoplasmic calcium may trigger membrane trafficking and transport of viral ER-associated proteins to viroplasms, sites of viral genome replication.</text>
</comment>
<comment type="function">
    <molecule>Protein 2C</molecule>
    <text evidence="23 24 25 26">Associates with and induces structural rearrangements of intracellular membranes. Triggers host autophagy by interacting with host BECN1 and thereby promotes viral replication. Participates in viral replication and interacts with host DHX9. Displays RNA-binding, nucleotide binding and NTPase activities (PubMed:20507978). May play a role in virion morphogenesis and viral RNA encapsidation by interacting with the capsid protein VP3.</text>
</comment>
<comment type="function">
    <molecule>Protein 3A</molecule>
    <text evidence="28 36 38">Plays important roles in virus replication, virulence and host range (PubMed:24352458, PubMed:29536193). Cooperates with host DDX56 to inhibit IRF3 nuclear translocation and subsequent type I interferon production (PubMed:31445188).</text>
</comment>
<comment type="function">
    <molecule>Protein 3B-1</molecule>
    <text evidence="17">Covalently linked to the 5'-end of both the positive-strand and negative-strand genomic RNAs. Acts as a genome-linked replication primer.</text>
</comment>
<comment type="function">
    <molecule>Protein 3B-2</molecule>
    <text evidence="17">Covalently linked to the 5'-end of both the positive-strand and negative-strand genomic RNAs. Acts as a genome-linked replication primer.</text>
</comment>
<comment type="function">
    <molecule>Protein 3B-3</molecule>
    <text evidence="17">Covalently linked to the 5'-end of both the positive-strand and negative-strand genomic RNAs. Acts as a genome-linked replication primer.</text>
</comment>
<comment type="function">
    <molecule>Protease 3C</molecule>
    <text evidence="37">Cysteine protease that generates mature viral proteins from the precursor polyprotein. In addition to its proteolytic activity, binds to viral RNA and thus influences viral genome replication. RNA and substrate bind cooperatively to the protease.</text>
</comment>
<comment type="function">
    <text evidence="10 17">RNA-directed RNA polymerase 3D-POL replicates genomic and antigenomic RNA by recognizing replications specific signals. Covalently attaches UMP to a tyrosine of VPg, which is used to prime RNA synthesis. The positive stranded RNA genome is first replicated at virus induced membranous vesicles, creating a dsRNA genomic replication form. This dsRNA is then used as template to synthesize positive stranded RNA genomes. ss(+)RNA genomes are either translated, replicated or encapsidated.</text>
</comment>
<comment type="catalytic activity">
    <molecule>Leader protease</molecule>
    <reaction>
        <text>Autocatalytically cleaves itself from the polyprotein of the foot-and-mouth disease virus by hydrolysis of a Lys-|-Gly bond, but then cleaves host cell initiation factor eIF-4G at bonds -Gly-|-Arg- and -Lys-|-Arg-.</text>
        <dbReference type="EC" id="3.4.22.46"/>
    </reaction>
</comment>
<comment type="catalytic activity">
    <molecule>Protein 2C</molecule>
    <reaction evidence="23">
        <text>a ribonucleoside 5'-triphosphate + H2O = a ribonucleoside 5'-diphosphate + phosphate + H(+)</text>
        <dbReference type="Rhea" id="RHEA:23680"/>
        <dbReference type="ChEBI" id="CHEBI:15377"/>
        <dbReference type="ChEBI" id="CHEBI:15378"/>
        <dbReference type="ChEBI" id="CHEBI:43474"/>
        <dbReference type="ChEBI" id="CHEBI:57930"/>
        <dbReference type="ChEBI" id="CHEBI:61557"/>
        <dbReference type="EC" id="3.6.1.15"/>
    </reaction>
</comment>
<comment type="catalytic activity">
    <molecule>RNA-directed RNA polymerase 3D-POL</molecule>
    <reaction evidence="10">
        <text>RNA(n) + a ribonucleoside 5'-triphosphate = RNA(n+1) + diphosphate</text>
        <dbReference type="Rhea" id="RHEA:21248"/>
        <dbReference type="Rhea" id="RHEA-COMP:14527"/>
        <dbReference type="Rhea" id="RHEA-COMP:17342"/>
        <dbReference type="ChEBI" id="CHEBI:33019"/>
        <dbReference type="ChEBI" id="CHEBI:61557"/>
        <dbReference type="ChEBI" id="CHEBI:140395"/>
        <dbReference type="EC" id="2.7.7.48"/>
    </reaction>
</comment>
<comment type="catalytic activity">
    <molecule>Protease 3C</molecule>
    <reaction evidence="12">
        <text>Selective cleavage of Gln-|-Gly bond in the poliovirus polyprotein. In other picornavirus reactions Glu may be substituted for Gln, and Ser or Thr for Gly.</text>
        <dbReference type="EC" id="3.4.22.28"/>
    </reaction>
</comment>
<comment type="subunit">
    <molecule>Leader protease</molecule>
    <text evidence="35">Interacts with host ISG15.</text>
</comment>
<comment type="subunit">
    <molecule>Capsid protein VP1</molecule>
    <text evidence="34 39">Interacts (via R-G-D motif) with host ITGAV/ITGB6 (PubMed:28534487). Interacts with host MAVS; this interaction inhibits binding of host TRAF3 to MAVS, thereby suppressing interferon-mediated responses (PubMed:33232374).</text>
</comment>
<comment type="subunit">
    <molecule>Protein 2B</molecule>
    <text evidence="43">Forms homooligomers.</text>
</comment>
<comment type="subunit">
    <molecule>Protein 2C</molecule>
    <text evidence="23 25 26">Homohexamer (PubMed:20507978). Interacts with host VIM (PubMed:23576498). Interacts with host BECN1 (PubMed:22933281).</text>
</comment>
<comment type="subunit">
    <molecule>Protein 3A</molecule>
    <text evidence="28">Interacts with host DCTN3 (PubMed:24352458).</text>
</comment>
<comment type="subunit">
    <molecule>Protein 3B-1</molecule>
    <text evidence="7">Interacts with RNA-dependent RNA polymerase; this interaction allows 3B-1 to binds 2 polymerases and act as a primer. It also allows the recruitment of the RNA-dependent RNA polymerase to host membranes.</text>
</comment>
<comment type="subunit">
    <molecule>Protein 3B-2</molecule>
    <text evidence="7">Interacts with RNA-dependent RNA polymerase; this interaction allows 3B-2 to act as a primer.</text>
</comment>
<comment type="subunit">
    <molecule>Protein 3B-3</molecule>
    <text evidence="7">Interacts with RNA-dependent RNA polymerase; this interaction allows 3B-3 to act as a primer.</text>
</comment>
<comment type="subunit">
    <molecule>RNA-directed RNA polymerase 3D-POL</molecule>
    <text evidence="7">Interacts with 3B-1; this interaction allows 3B-1 to binds 2 polymerases and act as a primer. It also allows the recruitment of the RNA-dependent RNA polymerase to host membranes (By similarity). Interacts with 3B-2; this interaction allows 3B-2 to act as a primer (By similarity). Interacts with 3B-3; this interaction allows 3B-3 to act as a primer (By similarity).</text>
</comment>
<comment type="subcellular location">
    <molecule>Leader protease</molecule>
    <subcellularLocation>
        <location evidence="19">Host nucleus</location>
    </subcellularLocation>
    <subcellularLocation>
        <location evidence="19">Host cytoplasm</location>
    </subcellularLocation>
</comment>
<comment type="subcellular location">
    <molecule>Capsid protein VP2</molecule>
    <subcellularLocation>
        <location evidence="31">Virion</location>
    </subcellularLocation>
    <subcellularLocation>
        <location evidence="43">Host cytoplasm</location>
    </subcellularLocation>
</comment>
<comment type="subcellular location">
    <molecule>Capsid protein VP3</molecule>
    <subcellularLocation>
        <location evidence="31">Virion</location>
    </subcellularLocation>
    <subcellularLocation>
        <location evidence="43">Host cytoplasm</location>
    </subcellularLocation>
</comment>
<comment type="subcellular location">
    <molecule>Capsid protein VP1</molecule>
    <subcellularLocation>
        <location evidence="31">Virion</location>
    </subcellularLocation>
    <subcellularLocation>
        <location evidence="43">Host cytoplasm</location>
    </subcellularLocation>
</comment>
<comment type="subcellular location">
    <molecule>Protein 2B</molecule>
    <subcellularLocation>
        <location evidence="33">Host endoplasmic reticulum membrane</location>
    </subcellularLocation>
</comment>
<comment type="subcellular location">
    <molecule>Protein 2C</molecule>
    <subcellularLocation>
        <location evidence="43">Host cytoplasmic vesicle membrane</location>
        <topology evidence="43">Peripheral membrane protein</topology>
        <orientation evidence="43">Cytoplasmic side</orientation>
    </subcellularLocation>
    <text evidence="1">Probably localizes to the surface of intracellular membrane vesicles that are induced after virus infection as the site for viral RNA replication. These vesicles are derived from the endoplasmic reticulum (By similarity).</text>
</comment>
<comment type="subcellular location">
    <molecule>Protein 3A</molecule>
    <subcellularLocation>
        <location evidence="28 36">Host cytoplasm</location>
    </subcellularLocation>
    <subcellularLocation>
        <location evidence="30">Host endoplasmic reticulum membrane</location>
    </subcellularLocation>
    <text evidence="30">Interacts with host endoplasmic reticulum membranes through its hydrophobic stretch, while its N- and C-terminus face the cytosol being accessible to other viral proteins for viral replication.</text>
</comment>
<comment type="subcellular location">
    <molecule>Protein 3B-1</molecule>
    <subcellularLocation>
        <location evidence="43">Virion</location>
    </subcellularLocation>
</comment>
<comment type="subcellular location">
    <molecule>Protein 3B-2</molecule>
    <subcellularLocation>
        <location evidence="43">Virion</location>
    </subcellularLocation>
</comment>
<comment type="subcellular location">
    <molecule>Protein 3B-3</molecule>
    <subcellularLocation>
        <location evidence="43">Virion</location>
    </subcellularLocation>
</comment>
<comment type="subcellular location">
    <molecule>Protease 3C</molecule>
    <subcellularLocation>
        <location evidence="43">Host cytoplasm</location>
    </subcellularLocation>
</comment>
<comment type="subcellular location">
    <molecule>RNA-directed RNA polymerase 3D-POL</molecule>
    <subcellularLocation>
        <location evidence="27">Host cytoplasm</location>
    </subcellularLocation>
    <subcellularLocation>
        <location evidence="27">Host nucleus</location>
    </subcellularLocation>
</comment>
<comment type="alternative products">
    <event type="alternative initiation"/>
    <isoform>
        <id>P03305-1</id>
        <name>Lab</name>
        <sequence type="displayed"/>
    </isoform>
    <isoform>
        <id>P03305-2</id>
        <name>Lb</name>
        <sequence type="described" ref="VSP_018982"/>
    </isoform>
</comment>
<comment type="PTM">
    <molecule>Leader protease</molecule>
    <text evidence="29">Removes six residues from its own C-terminus, generating sLb(pro).</text>
</comment>
<comment type="PTM">
    <molecule>Genome polyprotein</molecule>
    <text evidence="15 37">Specific enzymatic cleavages in vivo by the viral proteases yield a variety of precursors and mature proteins (PubMed:3041041). The polyprotein seems to be cotranslationally cleaved at the 2A/2B junction by a ribosomal skip from one codon to the next without formation of a peptide bond. This process would release the L-P1-2A peptide from the translational complex (PubMed:11297676).</text>
</comment>
<comment type="PTM">
    <molecule>Capsid protein VP0</molecule>
    <text evidence="4">During virion maturation, immature virions are rendered infectious following cleavage of VP0 into VP4 and VP2. This maturation seems to be an autocatalytic event triggered by the presence of RNA in the capsid and is followed by a conformational change of the particle.</text>
</comment>
<comment type="PTM">
    <molecule>Capsid protein VP4</molecule>
    <text evidence="7">Myristoylation is required during RNA encapsidation and formation of the mature virus particle.</text>
</comment>
<comment type="PTM">
    <molecule>Protein 3B-1</molecule>
    <text evidence="17 22">Uridylylated by the polymerase and covalently linked to the 5'-end of genomic RNA. These uridylylated forms act as a nucleotide-peptide primer for the polymerase.</text>
</comment>
<comment type="PTM">
    <molecule>Protein 3B-2</molecule>
    <text evidence="17 22">Uridylylated by the polymerase and covalently linked to the 5'-end of genomic RNA. These uridylylated forms act as a nucleotide-peptide primer for the polymerase.</text>
</comment>
<comment type="PTM">
    <molecule>Protein 3B-3</molecule>
    <text evidence="17 22">Uridylylated by the polymerase and covalently linked to the 5'-end of genomic RNA. These uridylylated forms act as a nucleotide-peptide primer for the polymerase.</text>
</comment>
<comment type="PTM">
    <molecule>Capsid protein VP1</molecule>
    <text evidence="40">The disulfide bond between VP1 and VP2 occurs after release of virus from the host cell.</text>
</comment>
<comment type="PTM">
    <molecule>Capsid protein VP2</molecule>
    <text evidence="40">The disulfide bond between VP1 and VP2 occurs after release of virus from the host cell.</text>
</comment>
<comment type="miscellaneous">
    <molecule>Capsid protein VP1</molecule>
    <text>Contains the main antigenic determinants of the virion; therefore, changes in its sequence must be responsible for the high antigenic variability of the virus.</text>
</comment>
<comment type="miscellaneous">
    <text evidence="43">The sequence shown is that of isolate O1/Bovine/Germany/Kaufbeuren/1966.</text>
</comment>
<comment type="similarity">
    <text evidence="43">Belongs to the picornaviruses polyprotein family.</text>
</comment>
<comment type="online information" name="Virus Particle ExploreR db">
    <link uri="https://viperdb.org/Info_Page.php?VDB=1bbt"/>
    <text>Icosahedral capsid structure</text>
</comment>
<comment type="online information" name="Virus Particle ExploreR db">
    <link uri="https://viperdb.org/Info_Page.php?VDB=1fod"/>
    <text>Icosahedral capsid structure</text>
</comment>
<comment type="online information" name="Virus Particle ExploreR db">
    <link uri="https://viperdb.org/Info_Page.php?VDB=1qqp"/>
    <text>Icosahedral capsid structure complexed with oligosaccharide receptor</text>
</comment>
<organism>
    <name type="scientific">Foot-and-mouth disease virus serotype O</name>
    <name type="common">FMDV</name>
    <dbReference type="NCBI Taxonomy" id="12118"/>
    <lineage>
        <taxon>Viruses</taxon>
        <taxon>Riboviria</taxon>
        <taxon>Orthornavirae</taxon>
        <taxon>Pisuviricota</taxon>
        <taxon>Pisoniviricetes</taxon>
        <taxon>Picornavirales</taxon>
        <taxon>Picornaviridae</taxon>
        <taxon>Caphthovirinae</taxon>
        <taxon>Aphthovirus</taxon>
        <taxon>Foot-and-mouth disease virus</taxon>
    </lineage>
</organism>
<accession>P03305</accession>
<accession>B2L5Y1</accession>
<keyword id="KW-0002">3D-structure</keyword>
<keyword id="KW-0024">Alternative initiation</keyword>
<keyword id="KW-0067">ATP-binding</keyword>
<keyword id="KW-0068">Autocatalytic cleavage</keyword>
<keyword id="KW-0167">Capsid protein</keyword>
<keyword id="KW-1167">Clathrin- and caveolin-independent endocytosis of virus by host</keyword>
<keyword id="KW-1165">Clathrin-mediated endocytosis of virus by host</keyword>
<keyword id="KW-0191">Covalent protein-RNA linkage</keyword>
<keyword id="KW-1015">Disulfide bond</keyword>
<keyword id="KW-0347">Helicase</keyword>
<keyword id="KW-1035">Host cytoplasm</keyword>
<keyword id="KW-1036">Host cytoplasmic vesicle</keyword>
<keyword id="KW-1038">Host endoplasmic reticulum</keyword>
<keyword id="KW-1043">Host membrane</keyword>
<keyword id="KW-1048">Host nucleus</keyword>
<keyword id="KW-0945">Host-virus interaction</keyword>
<keyword id="KW-0378">Hydrolase</keyword>
<keyword id="KW-0407">Ion channel</keyword>
<keyword id="KW-0406">Ion transport</keyword>
<keyword id="KW-0449">Lipoprotein</keyword>
<keyword id="KW-0472">Membrane</keyword>
<keyword id="KW-1122">Modulation of host chromatin by virus</keyword>
<keyword id="KW-0519">Myristate</keyword>
<keyword id="KW-0547">Nucleotide-binding</keyword>
<keyword id="KW-0548">Nucleotidyltransferase</keyword>
<keyword id="KW-0597">Phosphoprotein</keyword>
<keyword id="KW-0645">Protease</keyword>
<keyword id="KW-1185">Reference proteome</keyword>
<keyword id="KW-0694">RNA-binding</keyword>
<keyword id="KW-0696">RNA-directed RNA polymerase</keyword>
<keyword id="KW-1143">T=pseudo3 icosahedral capsid protein</keyword>
<keyword id="KW-0788">Thiol protease</keyword>
<keyword id="KW-0808">Transferase</keyword>
<keyword id="KW-0810">Translation regulation</keyword>
<keyword id="KW-0813">Transport</keyword>
<keyword id="KW-1161">Viral attachment to host cell</keyword>
<keyword id="KW-1182">Viral ion channel</keyword>
<keyword id="KW-1162">Viral penetration into host cytoplasm</keyword>
<keyword id="KW-0693">Viral RNA replication</keyword>
<keyword id="KW-0946">Virion</keyword>
<keyword id="KW-1164">Virus endocytosis by host</keyword>
<keyword id="KW-1160">Virus entry into host cell</keyword>
<proteinExistence type="evidence at protein level"/>
<reference key="1">
    <citation type="journal article" date="1984" name="Nucleic Acids Res.">
        <title>Nucleotide sequence and genome organization of foot-and-mouth disease virus.</title>
        <authorList>
            <person name="Forss S."/>
            <person name="Strebel K."/>
            <person name="Beck E."/>
            <person name="Schaller H."/>
        </authorList>
    </citation>
    <scope>NUCLEOTIDE SEQUENCE [GENOMIC RNA]</scope>
    <source>
        <strain>Isolate O1/Bovine/Germany/Kaufbeuren/1966</strain>
    </source>
</reference>
<reference key="2">
    <citation type="journal article" date="2008" name="PLoS Pathog.">
        <title>Transmission pathways of foot-and-mouth disease virus in the United Kingdom in 2007.</title>
        <authorList>
            <person name="Cottam E.M."/>
            <person name="Wadsworth J."/>
            <person name="Shaw A.E."/>
            <person name="Rowlands R.J."/>
            <person name="Goatley L."/>
            <person name="Maan S."/>
            <person name="Maan N.S."/>
            <person name="Mertens P.P.C."/>
            <person name="Ebert K."/>
            <person name="Li Y."/>
            <person name="Ryan E.D."/>
            <person name="Juleff N."/>
            <person name="Ferris N.P."/>
            <person name="Wilesmith J.W."/>
            <person name="Haydon D.T."/>
            <person name="King D.P."/>
            <person name="Paton D.J."/>
            <person name="Knowles N.J."/>
        </authorList>
    </citation>
    <scope>NUCLEOTIDE SEQUENCE [LARGE SCALE GENOMIC DNA]</scope>
    <source>
        <strain>Isolate O1/UK/BFS 1860/1967</strain>
    </source>
</reference>
<reference key="3">
    <citation type="journal article" date="1982" name="Nucleic Acids Res.">
        <title>Comparison of the amino acid sequence of the major immunogen from three serotypes of foot and mouth disease virus.</title>
        <authorList>
            <person name="Makoff A.J."/>
            <person name="Paynter C.A."/>
            <person name="Rowlands D.J."/>
            <person name="Boothroyd J.C."/>
        </authorList>
    </citation>
    <scope>NUCLEOTIDE SEQUENCE [GENOMIC RNA] OF 715-951</scope>
    <source>
        <strain>Isolate O1/UK/BFS 1860/1967</strain>
    </source>
</reference>
<reference key="4">
    <citation type="journal article" date="2004" name="Biochemistry">
        <title>Foot-and-mouth disease virus leader proteinase: specificity at the P2 and P3 positions and comparison with other papain-like enzymes.</title>
        <authorList>
            <person name="Kuehnel E."/>
            <person name="Cencic R."/>
            <person name="Foeger N."/>
            <person name="Skern T."/>
        </authorList>
    </citation>
    <scope>CHARACTERIZATION</scope>
</reference>
<reference key="5">
    <citation type="journal article" date="1987" name="Nucleic Acids Res.">
        <title>All foot and mouth disease virus serotypes initiate protein synthesis at two separate AUGs.</title>
        <authorList>
            <person name="Sangar D.V."/>
            <person name="Newton S.E."/>
            <person name="Rowlands D.J."/>
            <person name="Clarke B.E."/>
        </authorList>
    </citation>
    <scope>ALTERNATIVE INITIATION</scope>
</reference>
<reference key="6">
    <citation type="journal article" date="1987" name="J. Virol.">
        <title>Proteolytic processing of foot-and-mouth disease virus polyproteins expressed in a cell-free system from clone-derived transcripts.</title>
        <authorList>
            <person name="Vakharia V.N."/>
            <person name="Devaney M.A."/>
            <person name="Moore D.M."/>
            <person name="Dunn J.J."/>
            <person name="Grubman M.J."/>
        </authorList>
    </citation>
    <scope>FUNCTION (PROTEASE 3C)</scope>
    <scope>PROTEOLYTIC CLEAVAGE (GENOME POLYPROTEIN)</scope>
</reference>
<reference key="7">
    <citation type="journal article" date="1989" name="J. Gen. Virol.">
        <title>The cell attachment site on foot-and-mouth disease virus includes the amino acid sequence RGD (arginine-glycine-aspartic acid).</title>
        <authorList>
            <person name="Fox G."/>
            <person name="Parry N.R."/>
            <person name="Barnett P.V."/>
            <person name="McGinn B."/>
            <person name="Rowlands D.J."/>
            <person name="Brown F."/>
        </authorList>
    </citation>
    <scope>FUNCTION (CAPSID PROTEIN VP1)</scope>
</reference>
<reference key="8">
    <citation type="journal article" date="1991" name="J. Gen. Virol.">
        <title>Cleavage of foot-and-mouth disease virus polyprotein is mediated by residues located within a 19 amino acid sequence.</title>
        <authorList>
            <person name="Ryan M.D."/>
            <person name="King A.M."/>
            <person name="Thomas G.P."/>
        </authorList>
    </citation>
    <scope>FUNCTION (PROTEIN 2A)</scope>
</reference>
<reference key="9">
    <citation type="journal article" date="1993" name="Virology">
        <title>The two species of the foot-and-mouth disease virus leader protein, expressed individually, exhibit the same activities.</title>
        <authorList>
            <person name="Medina M."/>
            <person name="Domingo E."/>
            <person name="Brangwyn J.K."/>
            <person name="Belsham G.J."/>
        </authorList>
    </citation>
    <scope>FUNCTION (LEADER PROTEASE)</scope>
</reference>
<reference key="10">
    <citation type="journal article" date="2000" name="FEBS Lett.">
        <title>Extremely efficient cleavage of eIF4G by picornaviral proteinases L and 2A in vitro.</title>
        <authorList>
            <person name="Glaser W."/>
            <person name="Skern T."/>
        </authorList>
    </citation>
    <scope>FUNCTION (LEADER PROTEASE)</scope>
    <source>
        <strain>Isolate O1k</strain>
    </source>
</reference>
<reference key="11">
    <citation type="journal article" date="2001" name="J. Gen. Virol.">
        <title>Analysis of the aphthovirus 2A/2B polyprotein 'cleavage' mechanism indicates not a proteolytic reaction, but a novel translational effect: a putative ribosomal 'skip'.</title>
        <authorList>
            <person name="Donnelly M.L.L."/>
            <person name="Luke G."/>
            <person name="Mehrotra A."/>
            <person name="Li X."/>
            <person name="Hughes L.E."/>
            <person name="Gani D."/>
            <person name="Ryan M.D."/>
        </authorList>
    </citation>
    <scope>PROTEOLYTIC CLEAVAGE (GENOME POLYPROTEIN)</scope>
</reference>
<reference key="12">
    <citation type="journal article" date="2004" name="J. Virol.">
        <title>Cleavage of eukaryotic translation initiation factor 4GII within foot-and-mouth disease virus-infected cells: identification of the L-protease cleavage site in vitro.</title>
        <authorList>
            <person name="Gradi A."/>
            <person name="Foeger N."/>
            <person name="Strong R."/>
            <person name="Svitkin Y.V."/>
            <person name="Sonenberg N."/>
            <person name="Skern T."/>
            <person name="Belsham G.J."/>
        </authorList>
    </citation>
    <scope>FUNCTION (LEADER PROTEASE)</scope>
</reference>
<reference key="13">
    <citation type="journal article" date="2005" name="J. Virol.">
        <title>Factors required for the uridylylation of the foot-and-mouth disease virus 3B1, 3B2, and 3B3 peptides by the RNA-dependent RNA polymerase (3Dpol) in vitro.</title>
        <authorList>
            <person name="Nayak A."/>
            <person name="Goodfellow I.G."/>
            <person name="Belsham G.J."/>
        </authorList>
    </citation>
    <scope>COVALENT RNA LINKAGE (PROTEIN 3B-1)</scope>
    <scope>URIDYLYLATION</scope>
    <scope>FUNCTION (RNA-DIRECTED RNA POLYMERASE 3D-POL)</scope>
    <scope>COVALENT RNA LINKAGE (PROTEIN 3B-2)</scope>
    <scope>COVALENT RNA LINKAGE (PROTEIN 3B-3)</scope>
</reference>
<reference key="14">
    <citation type="journal article" date="2007" name="J. Virol.">
        <title>Degradation of nuclear factor kappa B during foot-and-mouth disease virus infection.</title>
        <authorList>
            <person name="de Los Santos T."/>
            <person name="Diaz-San Segundo F."/>
            <person name="Grubman M.J."/>
        </authorList>
    </citation>
    <scope>FUNCTION (LEADER PROTEASE)</scope>
    <scope>SUBCELLULAR LOCATION (LEADER PROTEASE)</scope>
</reference>
<reference key="15">
    <citation type="journal article" date="2008" name="J. Virol.">
        <title>Heparan sulfate-binding foot-and-mouth disease virus enters cells via caveola-mediated endocytosis.</title>
        <authorList>
            <person name="O'Donnell V."/>
            <person name="Larocco M."/>
            <person name="Baxt B."/>
        </authorList>
    </citation>
    <scope>FUNCTION (CAPSID PROTEIN VP2)</scope>
    <scope>FUNCTION (CAPSID PROTEIN VP3)</scope>
    <scope>FUNCTION (CAPSID PROTEIN VP1)</scope>
</reference>
<reference key="16">
    <citation type="journal article" date="2008" name="J. Virol.">
        <title>Foot-and-mouth disease virus forms a highly stable, EDTA-resistant complex with its principal receptor, integrin alphavbeta6: implications for infectiousness.</title>
        <authorList>
            <person name="Dicara D."/>
            <person name="Burman A."/>
            <person name="Clark S."/>
            <person name="Berryman S."/>
            <person name="Howard M.J."/>
            <person name="Hart I.R."/>
            <person name="Marshall J.F."/>
            <person name="Jackson T."/>
        </authorList>
    </citation>
    <scope>FUNCTION (CAPSID PROTEIN VP1)</scope>
</reference>
<reference key="17">
    <citation type="journal article" date="2009" name="Intervirology">
        <title>Cellular receptors for foot and mouth disease virus.</title>
        <authorList>
            <person name="Ruiz-Saenz J."/>
            <person name="Goez Y."/>
            <person name="Tabares W."/>
            <person name="Lopez-Herrera A."/>
        </authorList>
    </citation>
    <scope>REVIEW</scope>
</reference>
<reference key="18">
    <citation type="journal article" date="2010" name="J. Biol. Chem.">
        <title>Foot-and-mouth disease virus 2C is a hexameric AAA+ protein with a coordinated ATP hydrolysis mechanism.</title>
        <authorList>
            <person name="Sweeney T.R."/>
            <person name="Cisnetto V."/>
            <person name="Bose D."/>
            <person name="Bailey M."/>
            <person name="Wilson J.R."/>
            <person name="Zhang X."/>
            <person name="Belsham G.J."/>
            <person name="Curry S."/>
        </authorList>
    </citation>
    <scope>FUNCTION (PROTEIN 2C)</scope>
    <scope>CATALYTIC ACTIVITY (PROTEIN 2C)</scope>
    <scope>MUTAGENESIS OF LYS-1223; ASP-1267 AND ASN-1314</scope>
    <scope>SUBUNIT (PROTEIN 2C)</scope>
</reference>
<reference key="19">
    <citation type="journal article" date="2010" name="Peptides">
        <title>NMR solution structure of poliovirus uridylyated peptide linked to the genome (VPgpU).</title>
        <authorList>
            <person name="Schein C.H."/>
            <person name="Oezguen N."/>
            <person name="van der Heden van Noort G.J."/>
            <person name="Filippov D.V."/>
            <person name="Paul A."/>
            <person name="Kumar E."/>
            <person name="Braun W."/>
        </authorList>
    </citation>
    <scope>COVALENT RNA LINKAGE (PROTEIN 3B-1)</scope>
    <scope>COVALENT RNA LINKAGE (PROTEIN 3B-2)</scope>
    <scope>COVALENT RNA LINKAGE (PROTEIN 3B-3)</scope>
    <scope>URYDYLATION AT TYR-1581</scope>
    <scope>URYDYLATION AT TYR-1604</scope>
    <scope>URYDYLATION AT TYR-1628</scope>
    <scope>COVALENT RNA LINKAGE AT TYR-1581</scope>
    <scope>COVALENT RNA LINKAGE AT TYR-1604</scope>
    <scope>COVALENT RNA LINKAGE AT TYR-1628</scope>
</reference>
<reference key="20">
    <citation type="journal article" date="2011" name="J. Virol.">
        <title>The leader proteinase of foot-and-mouth disease virus negatively regulates the type I interferon pathway by acting as a viral deubiquitinase.</title>
        <authorList>
            <person name="Wang D."/>
            <person name="Fang L."/>
            <person name="Li P."/>
            <person name="Sun L."/>
            <person name="Fan J."/>
            <person name="Zhang Q."/>
            <person name="Luo R."/>
            <person name="Liu X."/>
            <person name="Li K."/>
            <person name="Chen H."/>
            <person name="Chen Z."/>
            <person name="Xiao S."/>
        </authorList>
    </citation>
    <scope>FUNCTION (LEADER PROTEASE)</scope>
</reference>
<reference key="21">
    <citation type="journal article" date="2012" name="J. Virol.">
        <title>Foot-and-mouth disease virus nonstructural protein 2C interacts with Beclin1, modulating virus replication.</title>
        <authorList>
            <person name="Gladue D.P."/>
            <person name="O'Donnell V."/>
            <person name="Baker-Branstetter R."/>
            <person name="Holinka L.G."/>
            <person name="Pacheco J.M."/>
            <person name="Fernandez-Sainz I."/>
            <person name="Lu Z."/>
            <person name="Brocchi E."/>
            <person name="Baxt B."/>
            <person name="Piccone M.E."/>
            <person name="Rodriguez L."/>
            <person name="Borca M.V."/>
        </authorList>
    </citation>
    <scope>FUNCTION (PROTEIN 2C)</scope>
    <scope>INTERACTION WITH HOST BECN1 (PROTEIN 2C)</scope>
</reference>
<reference key="22">
    <citation type="journal article" date="2013" name="J. Virol.">
        <title>Foot-and-mouth disease virus modulates cellular vimentin for virus survival.</title>
        <authorList>
            <person name="Gladue D.P."/>
            <person name="O'Donnell V."/>
            <person name="Baker-Branstetter R."/>
            <person name="Holinka L.G."/>
            <person name="Pacheco J.M."/>
            <person name="Fernandez Sainz I."/>
            <person name="Lu Z."/>
            <person name="Ambroggio X."/>
            <person name="Rodriguez L."/>
            <person name="Borca M.V."/>
        </authorList>
    </citation>
    <scope>FUNCTION (PROTEIN 2C)</scope>
    <scope>INTERACTION WITH HOST VIM (PROTEIN 2C)</scope>
</reference>
<reference key="23">
    <citation type="journal article" date="2013" name="Virology">
        <title>Characterization of a nuclear localization signal in the foot-and-mouth disease virus polymerase.</title>
        <authorList>
            <person name="Sanchez-Aparicio M.T."/>
            <person name="Rosas M.F."/>
            <person name="Sobrino F."/>
        </authorList>
    </citation>
    <scope>SUBCELLULAR LOCATION (RNA-DIRECTED RNA POLYMERASE 3D-POL)</scope>
    <scope>NUCLEAR LOCALIZATION SIGNAL (RNA-DIRECTED RNA POLYMERASE 3D-POL)</scope>
</reference>
<reference key="24">
    <citation type="journal article" date="2014" name="PLoS ONE">
        <title>Membrane topology and cellular dynamics of foot-and-mouth disease virus 3A protein.</title>
        <authorList>
            <person name="Gonzalez-Magaldi M."/>
            <person name="Martin-Acebes M.A."/>
            <person name="Kremer L."/>
            <person name="Sobrino F."/>
        </authorList>
    </citation>
    <scope>TOPOLOGY (PROTEIN 3A)</scope>
    <scope>SUBCELLULAR LOCATION (PROTEIN 3A)</scope>
</reference>
<reference key="25">
    <citation type="journal article" date="2014" name="J. Virol.">
        <title>Interaction of foot-and-mouth disease virus nonstructural protein 3A with host protein DCTN3 is important for viral virulence in cattle.</title>
        <authorList>
            <person name="Gladue D.P."/>
            <person name="O'Donnell V."/>
            <person name="Baker-Bransetter R."/>
            <person name="Pacheco J.M."/>
            <person name="Holinka L.G."/>
            <person name="Arzt J."/>
            <person name="Pauszek S."/>
            <person name="Fernandez-Sainz I."/>
            <person name="Fletcher P."/>
            <person name="Brocchi E."/>
            <person name="Lu Z."/>
            <person name="Rodriguez L.L."/>
            <person name="Borca M.V."/>
        </authorList>
    </citation>
    <scope>FUNCTION (PROTEIN 3A)</scope>
    <scope>INTERACTION WITH HOST DCTN3 (PROTEIN 3A)</scope>
    <scope>SUBCELLULAR LOCATION (PROTEIN 3A)</scope>
</reference>
<reference key="26">
    <citation type="journal article" date="2015" name="PLoS ONE">
        <title>Viroporin Activity of the Foot-and-Mouth Disease Virus Non-Structural 2B Protein.</title>
        <authorList>
            <person name="Ao D."/>
            <person name="Guo H.C."/>
            <person name="Sun S.Q."/>
            <person name="Sun D.H."/>
            <person name="Fung T.S."/>
            <person name="Wei Y.Q."/>
            <person name="Han S.C."/>
            <person name="Yao X.P."/>
            <person name="Cao S.Z."/>
            <person name="Liu D.X."/>
            <person name="Liu X.T."/>
        </authorList>
    </citation>
    <scope>FUNCTION (PROTEIN 2B)</scope>
    <scope>SUBUNIT (PROTEIN 2B)</scope>
    <scope>SUBCELLULAR LOCATION (PROTEIN 2B)</scope>
    <scope>TOPOLOGY (PROTEIN 2B)</scope>
</reference>
<reference key="27">
    <citation type="journal article" date="2017" name="Nat. Commun.">
        <title>Rules of engagement between alphavbeta6 integrin and foot-and-mouth disease virus.</title>
        <authorList>
            <person name="Kotecha A."/>
            <person name="Wang Q."/>
            <person name="Dong X."/>
            <person name="Ilca S.L."/>
            <person name="Ondiviela M."/>
            <person name="Zihe R."/>
            <person name="Seago J."/>
            <person name="Charleston B."/>
            <person name="Fry E.E."/>
            <person name="Abrescia N.G.A."/>
            <person name="Springer T.A."/>
            <person name="Huiskonen J.T."/>
            <person name="Stuart D.I."/>
        </authorList>
    </citation>
    <scope>FUNCTION (CAPSID PROTEIN VP1)</scope>
    <scope>INTERACTION WITH HOST ITGAV/ITGB6 (CAPSID PROTEIN VP1)</scope>
</reference>
<reference key="28">
    <citation type="journal article" date="2018" name="Arch. Virol.">
        <title>Relevance of the N-terminal and major hydrophobic domains of non-structural protein 3A in the replicative process of a DNA-launched foot-and-mouth disease virus replicon.</title>
        <authorList>
            <person name="Lotufo C.M."/>
            <person name="Wilda M."/>
            <person name="Giraldez A.N."/>
            <person name="Grigera P.R."/>
            <person name="Mattion N.M."/>
        </authorList>
    </citation>
    <scope>FUNCTION (PROTEIN 3A)</scope>
    <scope>SUBCELLULAR LOCATION (PROTEIN 3A)</scope>
</reference>
<reference key="29">
    <citation type="journal article" date="2018" name="Virology">
        <title>Cleavages at the three junctions within the foot-and-mouth disease virus capsid precursor (P1-2A) by the 3C protease are mutually independent.</title>
        <authorList>
            <person name="Kristensen T."/>
            <person name="Newman J."/>
            <person name="Guan S.H."/>
            <person name="Tuthill T.J."/>
            <person name="Belsham G.J."/>
        </authorList>
    </citation>
    <scope>PROTEOLYTIC CLEAVAGE (GENOME POLYPROTEIN)</scope>
</reference>
<reference key="30">
    <citation type="journal article" date="2020" name="PLoS Pathog.">
        <title>Foot-and-mouth disease virus VP1 target the MAVS to inhibit type-I interferon signaling and VP1 E83K mutation results in virus attenuation.</title>
        <authorList>
            <person name="Ekanayaka P."/>
            <person name="Lee S.Y."/>
            <person name="Herath T.U.B."/>
            <person name="Kim J.H."/>
            <person name="Kim T.H."/>
            <person name="Lee H."/>
            <person name="Chathuranga K."/>
            <person name="Chathuranga W.A.G."/>
            <person name="Park J.H."/>
            <person name="Lee J.S."/>
        </authorList>
    </citation>
    <scope>FUNCTION (CAPSID PROTEIN VP1)</scope>
    <scope>INTERACTION WITH HOST MAVS (CAPSID PROTEIN VP1)</scope>
</reference>
<reference key="31">
    <citation type="journal article" date="1989" name="Nature">
        <title>The three-dimensional structure of foot-and-mouth disease virus at 2.9-A resolution.</title>
        <authorList>
            <person name="Acharya R."/>
            <person name="Fry E."/>
            <person name="Stuart D."/>
            <person name="Fox G."/>
            <person name="Rowlands D."/>
            <person name="Brown F."/>
        </authorList>
    </citation>
    <scope>X-RAY CRYSTALLOGRAPHY (2.9 ANGSTROMS)</scope>
    <scope>FUNCTION (CAPSID PROTEIN VP2)</scope>
    <scope>FUNCTION (CAPSID PROTEIN VP3)</scope>
    <scope>FUNCTION (CAPSID PROTEIN VP1)</scope>
    <scope>SUBCELLULAR LOCATION (CAPSID PROTEIN VP2)</scope>
    <scope>SUBCELLULAR LOCATION (CAPSID PROTEIN VP3)</scope>
    <scope>SUBCELLULAR LOCATION (CAPSID PROTEIN VP1)</scope>
</reference>
<reference key="32">
    <citation type="journal article" date="1993" name="Nature">
        <title>Structure of a major immunogenic site on foot-and-mouth disease virus.</title>
        <authorList>
            <person name="Logan D."/>
            <person name="Abu-Ghazaleh R."/>
            <person name="Blakemore W."/>
            <person name="Curry S."/>
            <person name="Jackson T."/>
            <person name="King A."/>
            <person name="Lea S."/>
            <person name="Lewis R."/>
            <person name="Newman J."/>
            <person name="Parry N."/>
        </authorList>
    </citation>
    <scope>X-RAY CRYSTALLOGRAPHY (4.0 ANGSTROMS) OF 134-160</scope>
    <scope>DISULFIDE BOND</scope>
</reference>
<reference evidence="47" key="33">
    <citation type="journal article" date="1998" name="EMBO J.">
        <title>Structure of the foot-and-mouth disease virus leader protease: a papain-like fold adapted for self-processing and eIF4G recognition.</title>
        <authorList>
            <person name="Guarne A."/>
            <person name="Tormo J."/>
            <person name="Kirchweger R."/>
            <person name="Pfistermueller D."/>
            <person name="Fita I."/>
            <person name="Skern T."/>
        </authorList>
    </citation>
    <scope>X-RAY CRYSTALLOGRAPHY (3.0 ANGSTROMS) OF 29-201 OF MUTANT ALA-51</scope>
</reference>
<reference evidence="48" key="34">
    <citation type="journal article" date="1999" name="EMBO J.">
        <title>The structure and function of a foot-and-mouth disease virus-oligosaccharide receptor complex.</title>
        <authorList>
            <person name="Fry E.E."/>
            <person name="Lea S.M."/>
            <person name="Jackson T."/>
            <person name="Newman J.W."/>
            <person name="Ellard F.M."/>
            <person name="Blakemore W.E."/>
            <person name="Abu-Ghazaleh R."/>
            <person name="Samuel A."/>
            <person name="King A.M."/>
            <person name="Stuart D.I."/>
        </authorList>
    </citation>
    <scope>X-RAY CRYSTALLOGRAPHY (1.90 ANGSTROMS) OF 202-286; 287-504 AND 505-724</scope>
</reference>
<reference evidence="46" key="35">
    <citation type="journal article" date="2000" name="J. Mol. Biol.">
        <title>Structural and biochemical features distinguish the foot-and-mouth disease virus leader proteinase from other papain-like enzymes.</title>
        <authorList>
            <person name="Guarne A."/>
            <person name="Hampoelz B."/>
            <person name="Glaser W."/>
            <person name="Carpena X."/>
            <person name="Tormo J."/>
            <person name="Fita I."/>
            <person name="Skern T."/>
        </authorList>
    </citation>
    <scope>X-RAY CRYSTALLOGRAPHY (1.9 ANGSTROMS) OF 29-195 OF MUTANT ALA-51/SER-133</scope>
</reference>
<reference evidence="49 50" key="36">
    <citation type="journal article" date="2007" name="J. Mol. Biol.">
        <title>Investigating the substrate specificity and oligomerisation of the leader protease of foot and mouth disease virus using NMR.</title>
        <authorList>
            <person name="Cencic R."/>
            <person name="Mayer C."/>
            <person name="Juliano M.A."/>
            <person name="Juliano L."/>
            <person name="Konrat R."/>
            <person name="Kontaxis G."/>
            <person name="Skern T."/>
        </authorList>
    </citation>
    <scope>STRUCTURE BY NMR OF 29-195</scope>
</reference>
<reference evidence="51" key="37">
    <citation type="journal article" date="2014" name="Virology">
        <title>Foot-and-mouth disease virus leader proteinase: structural insights into the mechanism of intermolecular cleavage.</title>
        <authorList>
            <person name="Steinberger J."/>
            <person name="Grishkovskaya I."/>
            <person name="Cencic R."/>
            <person name="Juliano L."/>
            <person name="Juliano M.A."/>
            <person name="Skern T."/>
        </authorList>
    </citation>
    <scope>X-RAY CRYSTALLOGRAPHY (1.60 ANGSTROMS) OF 29-195</scope>
    <scope>FUNCTION (LEADER PROTEASE)</scope>
    <scope>ACTIVE SITE (LEADER PROTEASE)</scope>
</reference>
<reference evidence="52" key="38">
    <citation type="journal article" date="2018" name="Proc. Natl. Acad. Sci. U.S.A.">
        <title>Irreversible inactivation of ISG15 by a viral leader protease enables alternative infection detection strategies.</title>
        <authorList>
            <person name="Swatek K.N."/>
            <person name="Aumayr M."/>
            <person name="Pruneda J.N."/>
            <person name="Visser L.J."/>
            <person name="Berryman S."/>
            <person name="Kueck A.F."/>
            <person name="Geurink P.P."/>
            <person name="Ovaa H."/>
            <person name="van Kuppeveld F.J.M."/>
            <person name="Tuthill T.J."/>
            <person name="Skern T."/>
            <person name="Komander D."/>
        </authorList>
    </citation>
    <scope>X-RAY CRYSTALLOGRAPHY (1.50 ANGSTROMS) OF 29-195</scope>
    <scope>FUNCTION (LEADER PROTEASE)</scope>
    <scope>INTERACTION WITH HOST ISG15 (LEADER PROTEASE)</scope>
    <scope>ACTIVE SITE (LEADER PROTEASE)</scope>
</reference>
<reference key="39">
    <citation type="journal article" date="2019" name="Cell. Signal.">
        <title>DDX56 cooperates with FMDV 3A to enhance FMDV replication by inhibiting the phosphorylation of IRF3.</title>
        <authorList>
            <person name="Fu S.Z."/>
            <person name="Yang W.P."/>
            <person name="Ru Y."/>
            <person name="Zhang K.S."/>
            <person name="Wang Y."/>
            <person name="Liu X.T."/>
            <person name="Li D."/>
            <person name="Zheng H.X."/>
        </authorList>
    </citation>
    <scope>FUNCTION (PROTEIN 3A)</scope>
    <scope>INTERACTION WITH HOST DDX56 (PROTEIN 3A)</scope>
</reference>
<evidence type="ECO:0000250" key="1"/>
<evidence type="ECO:0000250" key="2">
    <source>
        <dbReference type="UniProtKB" id="A2I7M2"/>
    </source>
</evidence>
<evidence type="ECO:0000250" key="3">
    <source>
        <dbReference type="UniProtKB" id="P03300"/>
    </source>
</evidence>
<evidence type="ECO:0000250" key="4">
    <source>
        <dbReference type="UniProtKB" id="P03303"/>
    </source>
</evidence>
<evidence type="ECO:0000250" key="5">
    <source>
        <dbReference type="UniProtKB" id="P03306"/>
    </source>
</evidence>
<evidence type="ECO:0000250" key="6">
    <source>
        <dbReference type="UniProtKB" id="P03308"/>
    </source>
</evidence>
<evidence type="ECO:0000250" key="7">
    <source>
        <dbReference type="UniProtKB" id="P03311"/>
    </source>
</evidence>
<evidence type="ECO:0000250" key="8">
    <source>
        <dbReference type="UniProtKB" id="P12296"/>
    </source>
</evidence>
<evidence type="ECO:0000255" key="9"/>
<evidence type="ECO:0000255" key="10">
    <source>
        <dbReference type="PROSITE-ProRule" id="PRU00539"/>
    </source>
</evidence>
<evidence type="ECO:0000255" key="11">
    <source>
        <dbReference type="PROSITE-ProRule" id="PRU00551"/>
    </source>
</evidence>
<evidence type="ECO:0000255" key="12">
    <source>
        <dbReference type="PROSITE-ProRule" id="PRU01222"/>
    </source>
</evidence>
<evidence type="ECO:0000256" key="13">
    <source>
        <dbReference type="SAM" id="MobiDB-lite"/>
    </source>
</evidence>
<evidence type="ECO:0000269" key="14">
    <source>
    </source>
</evidence>
<evidence type="ECO:0000269" key="15">
    <source>
    </source>
</evidence>
<evidence type="ECO:0000269" key="16">
    <source>
    </source>
</evidence>
<evidence type="ECO:0000269" key="17">
    <source>
    </source>
</evidence>
<evidence type="ECO:0000269" key="18">
    <source>
    </source>
</evidence>
<evidence type="ECO:0000269" key="19">
    <source>
    </source>
</evidence>
<evidence type="ECO:0000269" key="20">
    <source>
    </source>
</evidence>
<evidence type="ECO:0000269" key="21">
    <source>
    </source>
</evidence>
<evidence type="ECO:0000269" key="22">
    <source>
    </source>
</evidence>
<evidence type="ECO:0000269" key="23">
    <source>
    </source>
</evidence>
<evidence type="ECO:0000269" key="24">
    <source>
    </source>
</evidence>
<evidence type="ECO:0000269" key="25">
    <source>
    </source>
</evidence>
<evidence type="ECO:0000269" key="26">
    <source>
    </source>
</evidence>
<evidence type="ECO:0000269" key="27">
    <source>
    </source>
</evidence>
<evidence type="ECO:0000269" key="28">
    <source>
    </source>
</evidence>
<evidence type="ECO:0000269" key="29">
    <source>
    </source>
</evidence>
<evidence type="ECO:0000269" key="30">
    <source>
    </source>
</evidence>
<evidence type="ECO:0000269" key="31">
    <source>
    </source>
</evidence>
<evidence type="ECO:0000269" key="32">
    <source>
    </source>
</evidence>
<evidence type="ECO:0000269" key="33">
    <source>
    </source>
</evidence>
<evidence type="ECO:0000269" key="34">
    <source>
    </source>
</evidence>
<evidence type="ECO:0000269" key="35">
    <source>
    </source>
</evidence>
<evidence type="ECO:0000269" key="36">
    <source>
    </source>
</evidence>
<evidence type="ECO:0000269" key="37">
    <source>
    </source>
</evidence>
<evidence type="ECO:0000269" key="38">
    <source>
    </source>
</evidence>
<evidence type="ECO:0000269" key="39">
    <source>
    </source>
</evidence>
<evidence type="ECO:0000269" key="40">
    <source>
    </source>
</evidence>
<evidence type="ECO:0000269" key="41">
    <source>
    </source>
</evidence>
<evidence type="ECO:0000269" key="42">
    <source>
    </source>
</evidence>
<evidence type="ECO:0000305" key="43"/>
<evidence type="ECO:0000305" key="44">
    <source>
    </source>
</evidence>
<evidence type="ECO:0000305" key="45">
    <source>
    </source>
</evidence>
<evidence type="ECO:0007744" key="46">
    <source>
        <dbReference type="PDB" id="1QMY"/>
    </source>
</evidence>
<evidence type="ECO:0007744" key="47">
    <source>
        <dbReference type="PDB" id="1QOL"/>
    </source>
</evidence>
<evidence type="ECO:0007744" key="48">
    <source>
        <dbReference type="PDB" id="1QQP"/>
    </source>
</evidence>
<evidence type="ECO:0007744" key="49">
    <source>
        <dbReference type="PDB" id="2JQF"/>
    </source>
</evidence>
<evidence type="ECO:0007744" key="50">
    <source>
        <dbReference type="PDB" id="2JQG"/>
    </source>
</evidence>
<evidence type="ECO:0007744" key="51">
    <source>
        <dbReference type="PDB" id="4QBB"/>
    </source>
</evidence>
<evidence type="ECO:0007744" key="52">
    <source>
        <dbReference type="PDB" id="6FFA"/>
    </source>
</evidence>
<evidence type="ECO:0007829" key="53">
    <source>
        <dbReference type="PDB" id="1QOL"/>
    </source>
</evidence>
<evidence type="ECO:0007829" key="54">
    <source>
        <dbReference type="PDB" id="1QQP"/>
    </source>
</evidence>
<evidence type="ECO:0007829" key="55">
    <source>
        <dbReference type="PDB" id="2JQF"/>
    </source>
</evidence>
<evidence type="ECO:0007829" key="56">
    <source>
        <dbReference type="PDB" id="2JQG"/>
    </source>
</evidence>
<evidence type="ECO:0007829" key="57">
    <source>
        <dbReference type="PDB" id="6FFA"/>
    </source>
</evidence>